<reference key="1">
    <citation type="journal article" date="1993" name="J. Steroid Biochem. Mol. Biol.">
        <title>Molecular cloning of multiple cDNAs encoding human enzymes structurally related to 3 alpha-hydroxysteroid dehydrogenase.</title>
        <authorList>
            <person name="Qin K.-N."/>
            <person name="New M.I."/>
            <person name="Cheng K.-C."/>
        </authorList>
    </citation>
    <scope>NUCLEOTIDE SEQUENCE [MRNA] (ISOFORM 1)</scope>
    <scope>VARIANTS GLN-5 AND ILE-175</scope>
    <source>
        <tissue>Liver</tissue>
    </source>
</reference>
<reference key="2">
    <citation type="journal article" date="1995" name="J. Biol. Chem.">
        <title>Substrate specificity, gene structure, and tissue-specific distribution of multiple human 3 alpha-hydroxysteroid dehydrogenases.</title>
        <authorList>
            <person name="Khanna M."/>
            <person name="Qin K.-N."/>
            <person name="Wang R.W."/>
            <person name="Cheng K.-C."/>
        </authorList>
    </citation>
    <scope>NUCLEOTIDE SEQUENCE [GENOMIC DNA]</scope>
    <scope>CATALYTIC ACTIVITY</scope>
    <scope>FUNCTION</scope>
    <scope>TISSUE SPECIFICITY</scope>
    <scope>VARIANTS GLN-5 AND ILE-175</scope>
</reference>
<reference key="3">
    <citation type="journal article" date="1995" name="J. Steroid Biochem. Mol. Biol.">
        <title>Distribution of 3 alpha-hydroxysteroid dehydrogenase in rat brain and molecular cloning of multiple cDNAs encoding structurally related proteins in humans.</title>
        <authorList>
            <person name="Khanna M."/>
            <person name="Qin K.-N."/>
            <person name="Cheng K.-C."/>
        </authorList>
    </citation>
    <scope>NUCLEOTIDE SEQUENCE [MRNA] (ISOFORM 1)</scope>
    <scope>VARIANT GLN-5</scope>
    <source>
        <tissue>Liver</tissue>
    </source>
</reference>
<reference key="4">
    <citation type="journal article" date="1997" name="Mol. Endocrinol.">
        <title>Expression and characterization of recombinant type 2 3 alpha-hydroxysteroid dehydrogenase (HSD) from human prostate: demonstration of bifunctional 3 alpha/17 beta-HSD activity and cellular distribution.</title>
        <authorList>
            <person name="Lin H.-K."/>
            <person name="Jez J.M."/>
            <person name="Schlegel B.P."/>
            <person name="Peehl D.M."/>
            <person name="Pachter J.A."/>
            <person name="Penning T.M."/>
        </authorList>
    </citation>
    <scope>NUCLEOTIDE SEQUENCE [MRNA] (ISOFORM 1)</scope>
    <scope>FUNCTION</scope>
    <scope>CATALYTIC ACTIVITY</scope>
    <scope>SUBSTRATE SPECIFICITY</scope>
    <scope>BIOPHYSICOCHEMICAL PROPERTIES</scope>
    <scope>TISSUE SPECIFICITY</scope>
    <scope>VARIANT GLN-5</scope>
    <source>
        <tissue>Prostate</tissue>
    </source>
</reference>
<reference key="5">
    <citation type="journal article" date="1999" name="FEBS Lett.">
        <title>cDNA cloning, expression and characterization of human prostaglandin F synthase.</title>
        <authorList>
            <person name="Suzuki-Yamamoto T."/>
            <person name="Nishizawa M."/>
            <person name="Fukui M."/>
            <person name="Okuda-Ashitaka E."/>
            <person name="Nakajima T."/>
            <person name="Ito S."/>
            <person name="Watanabe K."/>
        </authorList>
    </citation>
    <scope>NUCLEOTIDE SEQUENCE [MRNA] (ISOFORM 1)</scope>
    <scope>NUCLEOTIDE SEQUENCE [GENOMIC DNA] OF 124-190</scope>
    <scope>FUNCTION</scope>
    <scope>CATALYTIC ACTIVITY</scope>
    <scope>TISSUE SPECIFICITY</scope>
    <scope>VARIANT GLN-5</scope>
    <scope>SUBCELLULAR LOCATION</scope>
    <source>
        <tissue>Lung</tissue>
    </source>
</reference>
<reference key="6">
    <citation type="journal article" date="1999" name="Proc. Natl. Acad. Sci. U.S.A.">
        <title>Selective serotonin reuptake inhibitors directly alter activity of neurosteroidogenic enzymes.</title>
        <authorList>
            <person name="Griffin L.D."/>
            <person name="Mellon S.H."/>
        </authorList>
    </citation>
    <scope>NUCLEOTIDE SEQUENCE [MRNA] (ISOFORM 1)</scope>
    <scope>BIOPHYSICOCHEMICAL PROPERTIES</scope>
    <scope>TISSUE SPECIFICITY</scope>
    <scope>VARIANT GLN-5</scope>
    <scope>CATALYTIC ACTIVITY</scope>
    <scope>FUNCTION</scope>
    <source>
        <tissue>Brain</tissue>
    </source>
</reference>
<reference key="7">
    <citation type="journal article" date="2000" name="Genes Cells">
        <title>Close kinship of human 20alpha-hydroxysteroid dehydrogenase gene with three aldo-keto reductase genes.</title>
        <authorList>
            <person name="Nishizawa M."/>
            <person name="Nakajima T."/>
            <person name="Yasuda K."/>
            <person name="Kanzaki H."/>
            <person name="Sasaguri Y."/>
            <person name="Watanabe K."/>
            <person name="Ito S."/>
        </authorList>
    </citation>
    <scope>NUCLEOTIDE SEQUENCE [GENOMIC DNA]</scope>
    <source>
        <tissue>Liver</tissue>
    </source>
</reference>
<reference key="8">
    <citation type="journal article" date="2001" name="Mol. Cell. Endocrinol.">
        <title>Structure-function aspects and inhibitor design of type 5 17beta-hydroxysteroid dehydrogenase (AKR1C3).</title>
        <authorList>
            <person name="Penning T.M."/>
            <person name="Burczynski M.E."/>
            <person name="Jez J.M."/>
            <person name="Lin H.-K."/>
            <person name="Ma H."/>
            <person name="Moore M."/>
            <person name="Ratnam K."/>
            <person name="Palackal N."/>
        </authorList>
    </citation>
    <scope>NUCLEOTIDE SEQUENCE [MRNA] (ISOFORM 1)</scope>
    <scope>CATALYTIC ACTIVITY</scope>
    <scope>FUNCTION</scope>
    <scope>TISSUE SPECIFICITY</scope>
    <scope>BIOPHYSICOCHEMICAL PROPERTIES</scope>
    <source>
        <tissue>Prostate</tissue>
    </source>
</reference>
<reference key="9">
    <citation type="journal article" date="1995" name="DNA Res.">
        <title>Prediction of the coding sequences of unidentified human genes. III. The coding sequences of 40 new genes (KIAA0081-KIAA0120) deduced by analysis of cDNA clones from human cell line KG-1.</title>
        <authorList>
            <person name="Nagase T."/>
            <person name="Miyajima N."/>
            <person name="Tanaka A."/>
            <person name="Sazuka T."/>
            <person name="Seki N."/>
            <person name="Sato S."/>
            <person name="Tabata S."/>
            <person name="Ishikawa K."/>
            <person name="Kawarabayasi Y."/>
            <person name="Kotani H."/>
            <person name="Nomura N."/>
        </authorList>
    </citation>
    <scope>NUCLEOTIDE SEQUENCE [LARGE SCALE MRNA] (ISOFORM 1)</scope>
    <scope>VARIANT GLN-5</scope>
    <source>
        <tissue>Bone marrow</tissue>
    </source>
</reference>
<reference key="10">
    <citation type="submission" date="2003-05" db="EMBL/GenBank/DDBJ databases">
        <title>Cloning of human full-length CDSs in BD Creator(TM) system donor vector.</title>
        <authorList>
            <person name="Kalnine N."/>
            <person name="Chen X."/>
            <person name="Rolfs A."/>
            <person name="Halleck A."/>
            <person name="Hines L."/>
            <person name="Eisenstein S."/>
            <person name="Koundinya M."/>
            <person name="Raphael J."/>
            <person name="Moreira D."/>
            <person name="Kelley T."/>
            <person name="LaBaer J."/>
            <person name="Lin Y."/>
            <person name="Phelan M."/>
            <person name="Farmer A."/>
        </authorList>
    </citation>
    <scope>NUCLEOTIDE SEQUENCE [LARGE SCALE MRNA] (ISOFORM 1)</scope>
</reference>
<reference key="11">
    <citation type="journal article" date="2004" name="Nat. Genet.">
        <title>Complete sequencing and characterization of 21,243 full-length human cDNAs.</title>
        <authorList>
            <person name="Ota T."/>
            <person name="Suzuki Y."/>
            <person name="Nishikawa T."/>
            <person name="Otsuki T."/>
            <person name="Sugiyama T."/>
            <person name="Irie R."/>
            <person name="Wakamatsu A."/>
            <person name="Hayashi K."/>
            <person name="Sato H."/>
            <person name="Nagai K."/>
            <person name="Kimura K."/>
            <person name="Makita H."/>
            <person name="Sekine M."/>
            <person name="Obayashi M."/>
            <person name="Nishi T."/>
            <person name="Shibahara T."/>
            <person name="Tanaka T."/>
            <person name="Ishii S."/>
            <person name="Yamamoto J."/>
            <person name="Saito K."/>
            <person name="Kawai Y."/>
            <person name="Isono Y."/>
            <person name="Nakamura Y."/>
            <person name="Nagahari K."/>
            <person name="Murakami K."/>
            <person name="Yasuda T."/>
            <person name="Iwayanagi T."/>
            <person name="Wagatsuma M."/>
            <person name="Shiratori A."/>
            <person name="Sudo H."/>
            <person name="Hosoiri T."/>
            <person name="Kaku Y."/>
            <person name="Kodaira H."/>
            <person name="Kondo H."/>
            <person name="Sugawara M."/>
            <person name="Takahashi M."/>
            <person name="Kanda K."/>
            <person name="Yokoi T."/>
            <person name="Furuya T."/>
            <person name="Kikkawa E."/>
            <person name="Omura Y."/>
            <person name="Abe K."/>
            <person name="Kamihara K."/>
            <person name="Katsuta N."/>
            <person name="Sato K."/>
            <person name="Tanikawa M."/>
            <person name="Yamazaki M."/>
            <person name="Ninomiya K."/>
            <person name="Ishibashi T."/>
            <person name="Yamashita H."/>
            <person name="Murakawa K."/>
            <person name="Fujimori K."/>
            <person name="Tanai H."/>
            <person name="Kimata M."/>
            <person name="Watanabe M."/>
            <person name="Hiraoka S."/>
            <person name="Chiba Y."/>
            <person name="Ishida S."/>
            <person name="Ono Y."/>
            <person name="Takiguchi S."/>
            <person name="Watanabe S."/>
            <person name="Yosida M."/>
            <person name="Hotuta T."/>
            <person name="Kusano J."/>
            <person name="Kanehori K."/>
            <person name="Takahashi-Fujii A."/>
            <person name="Hara H."/>
            <person name="Tanase T.-O."/>
            <person name="Nomura Y."/>
            <person name="Togiya S."/>
            <person name="Komai F."/>
            <person name="Hara R."/>
            <person name="Takeuchi K."/>
            <person name="Arita M."/>
            <person name="Imose N."/>
            <person name="Musashino K."/>
            <person name="Yuuki H."/>
            <person name="Oshima A."/>
            <person name="Sasaki N."/>
            <person name="Aotsuka S."/>
            <person name="Yoshikawa Y."/>
            <person name="Matsunawa H."/>
            <person name="Ichihara T."/>
            <person name="Shiohata N."/>
            <person name="Sano S."/>
            <person name="Moriya S."/>
            <person name="Momiyama H."/>
            <person name="Satoh N."/>
            <person name="Takami S."/>
            <person name="Terashima Y."/>
            <person name="Suzuki O."/>
            <person name="Nakagawa S."/>
            <person name="Senoh A."/>
            <person name="Mizoguchi H."/>
            <person name="Goto Y."/>
            <person name="Shimizu F."/>
            <person name="Wakebe H."/>
            <person name="Hishigaki H."/>
            <person name="Watanabe T."/>
            <person name="Sugiyama A."/>
            <person name="Takemoto M."/>
            <person name="Kawakami B."/>
            <person name="Yamazaki M."/>
            <person name="Watanabe K."/>
            <person name="Kumagai A."/>
            <person name="Itakura S."/>
            <person name="Fukuzumi Y."/>
            <person name="Fujimori Y."/>
            <person name="Komiyama M."/>
            <person name="Tashiro H."/>
            <person name="Tanigami A."/>
            <person name="Fujiwara T."/>
            <person name="Ono T."/>
            <person name="Yamada K."/>
            <person name="Fujii Y."/>
            <person name="Ozaki K."/>
            <person name="Hirao M."/>
            <person name="Ohmori Y."/>
            <person name="Kawabata A."/>
            <person name="Hikiji T."/>
            <person name="Kobatake N."/>
            <person name="Inagaki H."/>
            <person name="Ikema Y."/>
            <person name="Okamoto S."/>
            <person name="Okitani R."/>
            <person name="Kawakami T."/>
            <person name="Noguchi S."/>
            <person name="Itoh T."/>
            <person name="Shigeta K."/>
            <person name="Senba T."/>
            <person name="Matsumura K."/>
            <person name="Nakajima Y."/>
            <person name="Mizuno T."/>
            <person name="Morinaga M."/>
            <person name="Sasaki M."/>
            <person name="Togashi T."/>
            <person name="Oyama M."/>
            <person name="Hata H."/>
            <person name="Watanabe M."/>
            <person name="Komatsu T."/>
            <person name="Mizushima-Sugano J."/>
            <person name="Satoh T."/>
            <person name="Shirai Y."/>
            <person name="Takahashi Y."/>
            <person name="Nakagawa K."/>
            <person name="Okumura K."/>
            <person name="Nagase T."/>
            <person name="Nomura N."/>
            <person name="Kikuchi H."/>
            <person name="Masuho Y."/>
            <person name="Yamashita R."/>
            <person name="Nakai K."/>
            <person name="Yada T."/>
            <person name="Nakamura Y."/>
            <person name="Ohara O."/>
            <person name="Isogai T."/>
            <person name="Sugano S."/>
        </authorList>
    </citation>
    <scope>NUCLEOTIDE SEQUENCE [LARGE SCALE MRNA] (ISOFORMS 1 AND 2)</scope>
    <source>
        <tissue>Tongue</tissue>
    </source>
</reference>
<reference key="12">
    <citation type="journal article" date="2004" name="Nature">
        <title>The DNA sequence and comparative analysis of human chromosome 10.</title>
        <authorList>
            <person name="Deloukas P."/>
            <person name="Earthrowl M.E."/>
            <person name="Grafham D.V."/>
            <person name="Rubenfield M."/>
            <person name="French L."/>
            <person name="Steward C.A."/>
            <person name="Sims S.K."/>
            <person name="Jones M.C."/>
            <person name="Searle S."/>
            <person name="Scott C."/>
            <person name="Howe K."/>
            <person name="Hunt S.E."/>
            <person name="Andrews T.D."/>
            <person name="Gilbert J.G.R."/>
            <person name="Swarbreck D."/>
            <person name="Ashurst J.L."/>
            <person name="Taylor A."/>
            <person name="Battles J."/>
            <person name="Bird C.P."/>
            <person name="Ainscough R."/>
            <person name="Almeida J.P."/>
            <person name="Ashwell R.I.S."/>
            <person name="Ambrose K.D."/>
            <person name="Babbage A.K."/>
            <person name="Bagguley C.L."/>
            <person name="Bailey J."/>
            <person name="Banerjee R."/>
            <person name="Bates K."/>
            <person name="Beasley H."/>
            <person name="Bray-Allen S."/>
            <person name="Brown A.J."/>
            <person name="Brown J.Y."/>
            <person name="Burford D.C."/>
            <person name="Burrill W."/>
            <person name="Burton J."/>
            <person name="Cahill P."/>
            <person name="Camire D."/>
            <person name="Carter N.P."/>
            <person name="Chapman J.C."/>
            <person name="Clark S.Y."/>
            <person name="Clarke G."/>
            <person name="Clee C.M."/>
            <person name="Clegg S."/>
            <person name="Corby N."/>
            <person name="Coulson A."/>
            <person name="Dhami P."/>
            <person name="Dutta I."/>
            <person name="Dunn M."/>
            <person name="Faulkner L."/>
            <person name="Frankish A."/>
            <person name="Frankland J.A."/>
            <person name="Garner P."/>
            <person name="Garnett J."/>
            <person name="Gribble S."/>
            <person name="Griffiths C."/>
            <person name="Grocock R."/>
            <person name="Gustafson E."/>
            <person name="Hammond S."/>
            <person name="Harley J.L."/>
            <person name="Hart E."/>
            <person name="Heath P.D."/>
            <person name="Ho T.P."/>
            <person name="Hopkins B."/>
            <person name="Horne J."/>
            <person name="Howden P.J."/>
            <person name="Huckle E."/>
            <person name="Hynds C."/>
            <person name="Johnson C."/>
            <person name="Johnson D."/>
            <person name="Kana A."/>
            <person name="Kay M."/>
            <person name="Kimberley A.M."/>
            <person name="Kershaw J.K."/>
            <person name="Kokkinaki M."/>
            <person name="Laird G.K."/>
            <person name="Lawlor S."/>
            <person name="Lee H.M."/>
            <person name="Leongamornlert D.A."/>
            <person name="Laird G."/>
            <person name="Lloyd C."/>
            <person name="Lloyd D.M."/>
            <person name="Loveland J."/>
            <person name="Lovell J."/>
            <person name="McLaren S."/>
            <person name="McLay K.E."/>
            <person name="McMurray A."/>
            <person name="Mashreghi-Mohammadi M."/>
            <person name="Matthews L."/>
            <person name="Milne S."/>
            <person name="Nickerson T."/>
            <person name="Nguyen M."/>
            <person name="Overton-Larty E."/>
            <person name="Palmer S.A."/>
            <person name="Pearce A.V."/>
            <person name="Peck A.I."/>
            <person name="Pelan S."/>
            <person name="Phillimore B."/>
            <person name="Porter K."/>
            <person name="Rice C.M."/>
            <person name="Rogosin A."/>
            <person name="Ross M.T."/>
            <person name="Sarafidou T."/>
            <person name="Sehra H.K."/>
            <person name="Shownkeen R."/>
            <person name="Skuce C.D."/>
            <person name="Smith M."/>
            <person name="Standring L."/>
            <person name="Sycamore N."/>
            <person name="Tester J."/>
            <person name="Thorpe A."/>
            <person name="Torcasso W."/>
            <person name="Tracey A."/>
            <person name="Tromans A."/>
            <person name="Tsolas J."/>
            <person name="Wall M."/>
            <person name="Walsh J."/>
            <person name="Wang H."/>
            <person name="Weinstock K."/>
            <person name="West A.P."/>
            <person name="Willey D.L."/>
            <person name="Whitehead S.L."/>
            <person name="Wilming L."/>
            <person name="Wray P.W."/>
            <person name="Young L."/>
            <person name="Chen Y."/>
            <person name="Lovering R.C."/>
            <person name="Moschonas N.K."/>
            <person name="Siebert R."/>
            <person name="Fechtel K."/>
            <person name="Bentley D."/>
            <person name="Durbin R.M."/>
            <person name="Hubbard T."/>
            <person name="Doucette-Stamm L."/>
            <person name="Beck S."/>
            <person name="Smith D.R."/>
            <person name="Rogers J."/>
        </authorList>
    </citation>
    <scope>NUCLEOTIDE SEQUENCE [LARGE SCALE GENOMIC DNA]</scope>
</reference>
<reference key="13">
    <citation type="submission" date="2005-09" db="EMBL/GenBank/DDBJ databases">
        <authorList>
            <person name="Mural R.J."/>
            <person name="Istrail S."/>
            <person name="Sutton G."/>
            <person name="Florea L."/>
            <person name="Halpern A.L."/>
            <person name="Mobarry C.M."/>
            <person name="Lippert R."/>
            <person name="Walenz B."/>
            <person name="Shatkay H."/>
            <person name="Dew I."/>
            <person name="Miller J.R."/>
            <person name="Flanigan M.J."/>
            <person name="Edwards N.J."/>
            <person name="Bolanos R."/>
            <person name="Fasulo D."/>
            <person name="Halldorsson B.V."/>
            <person name="Hannenhalli S."/>
            <person name="Turner R."/>
            <person name="Yooseph S."/>
            <person name="Lu F."/>
            <person name="Nusskern D.R."/>
            <person name="Shue B.C."/>
            <person name="Zheng X.H."/>
            <person name="Zhong F."/>
            <person name="Delcher A.L."/>
            <person name="Huson D.H."/>
            <person name="Kravitz S.A."/>
            <person name="Mouchard L."/>
            <person name="Reinert K."/>
            <person name="Remington K.A."/>
            <person name="Clark A.G."/>
            <person name="Waterman M.S."/>
            <person name="Eichler E.E."/>
            <person name="Adams M.D."/>
            <person name="Hunkapiller M.W."/>
            <person name="Myers E.W."/>
            <person name="Venter J.C."/>
        </authorList>
    </citation>
    <scope>NUCLEOTIDE SEQUENCE [LARGE SCALE GENOMIC DNA]</scope>
</reference>
<reference key="14">
    <citation type="journal article" date="2004" name="Genome Res.">
        <title>The status, quality, and expansion of the NIH full-length cDNA project: the Mammalian Gene Collection (MGC).</title>
        <authorList>
            <consortium name="The MGC Project Team"/>
        </authorList>
    </citation>
    <scope>NUCLEOTIDE SEQUENCE [LARGE SCALE MRNA] (ISOFORM 1)</scope>
    <source>
        <tissue>Colon</tissue>
        <tissue>Urinary bladder</tissue>
    </source>
</reference>
<reference key="15">
    <citation type="journal article" date="1999" name="Endocrinology">
        <title>Characteristics of a highly labile human type 5 17beta-hydroxysteroid dehydrogenase.</title>
        <authorList>
            <person name="Dufort I."/>
            <person name="Rheault P."/>
            <person name="Huang X.-F."/>
            <person name="Soucy P."/>
            <person name="Luu-The V."/>
        </authorList>
    </citation>
    <scope>FUNCTION</scope>
    <scope>CATALYTIC ACTIVITY</scope>
    <scope>SUBSTRATE SPECIFICITY</scope>
    <scope>TISSUE SPECIFICITY</scope>
    <scope>CHARACTERIZATION OF VARIANT ILE-175</scope>
    <scope>MUTAGENESIS OF LYS-75</scope>
</reference>
<reference key="16">
    <citation type="journal article" date="2000" name="Biochem. J.">
        <title>Human 3alpha-hydroxysteroid dehydrogenase isoforms (AKR1C1-AKR1C4) of the aldo-keto reductase superfamily: functional plasticity and tissue distribution reveals roles in the inactivation and formation of male and female sex hormones.</title>
        <authorList>
            <person name="Penning T.M."/>
            <person name="Burczynski M.E."/>
            <person name="Jez J.M."/>
            <person name="Hung C.F."/>
            <person name="Lin H.K."/>
            <person name="Ma H."/>
            <person name="Moore M."/>
            <person name="Palackal N."/>
            <person name="Ratnam K."/>
        </authorList>
    </citation>
    <scope>CATALYTIC ACTIVITY</scope>
    <scope>FUNCTION</scope>
    <scope>TISSUE SPECIFICITY</scope>
    <scope>BIOPHYSICOCHEMICAL PROPERTIES</scope>
</reference>
<reference key="17">
    <citation type="journal article" date="2004" name="Arch. Biochem. Biophys.">
        <title>Synthesis of prostaglandin F ethanolamide by prostaglandin F synthase and identification of Bimatoprost as a potent inhibitor of the enzyme: new enzyme assay method using LC/ESI/MS.</title>
        <authorList>
            <person name="Koda N."/>
            <person name="Tsutsui Y."/>
            <person name="Niwa H."/>
            <person name="Ito S."/>
            <person name="Woodward D.F."/>
            <person name="Watanabe K."/>
        </authorList>
    </citation>
    <scope>FUNCTION</scope>
    <scope>CATALYTIC ACTIVITY</scope>
</reference>
<reference key="18">
    <citation type="journal article" date="2004" name="J. Biol. Chem.">
        <title>Human cytosolic 3alpha-hydroxysteroid dehydrogenases of the aldo-keto reductase superfamily display significant 3beta-hydroxysteroid dehydrogenase activity: implications for steroid hormone metabolism and action.</title>
        <authorList>
            <person name="Steckelbroeck S."/>
            <person name="Jin Y."/>
            <person name="Gopishetty S."/>
            <person name="Oyesanmi B."/>
            <person name="Penning T.M."/>
        </authorList>
    </citation>
    <scope>CATALYTIC ACTIVITY</scope>
    <scope>FUNCTION</scope>
    <scope>ACTIVITY REGULATION</scope>
</reference>
<reference key="19">
    <citation type="journal article" date="2009" name="J. Biochem.">
        <title>Prostaglandin F2alpha synthase activities of aldo-keto reductase 1B1, 1B3 and 1B7.</title>
        <authorList>
            <person name="Kabututu Z."/>
            <person name="Manin M."/>
            <person name="Pointud J.C."/>
            <person name="Maruyama T."/>
            <person name="Nagata N."/>
            <person name="Lambert S."/>
            <person name="Lefrancois-Martinez A.M."/>
            <person name="Martinez A."/>
            <person name="Urade Y."/>
        </authorList>
    </citation>
    <scope>FUNCTION</scope>
    <scope>CATALYTIC ACTIVITY</scope>
    <scope>BIOPHYSICOCHEMICAL PROPERTIES</scope>
</reference>
<reference key="20">
    <citation type="journal article" date="2010" name="J. Steroid Biochem. Mol. Biol.">
        <title>Aldo-keto reductase 1C3 expression in MCF-7 cells reveals roles in steroid hormone and prostaglandin metabolism that may explain its over-expression in breast cancer.</title>
        <authorList>
            <person name="Byrns M.C."/>
            <person name="Duan L."/>
            <person name="Lee S.H."/>
            <person name="Blair I.A."/>
            <person name="Penning T.M."/>
        </authorList>
    </citation>
    <scope>FUNCTION</scope>
    <scope>CATALYTIC ACTIVITY</scope>
</reference>
<reference key="21">
    <citation type="journal article" date="2011" name="Biochem. J.">
        <title>Retinaldehyde is a substrate for human aldo-keto reductases of the 1C subfamily.</title>
        <authorList>
            <person name="Ruiz F.X."/>
            <person name="Porte S."/>
            <person name="Gallego O."/>
            <person name="Moro A."/>
            <person name="Ardevol A."/>
            <person name="Del Rio-Espinola A."/>
            <person name="Rovira C."/>
            <person name="Farres J."/>
            <person name="Pares X."/>
        </authorList>
    </citation>
    <scope>FUNCTION</scope>
    <scope>CATALYTIC ACTIVITY</scope>
    <scope>BIOPHYSICOCHEMICAL PROPERTIES</scope>
    <scope>MUTAGENESIS OF ARG-226</scope>
</reference>
<reference key="22">
    <citation type="journal article" date="2011" name="BMC Syst. Biol.">
        <title>Initial characterization of the human central proteome.</title>
        <authorList>
            <person name="Burkard T.R."/>
            <person name="Planyavsky M."/>
            <person name="Kaupe I."/>
            <person name="Breitwieser F.P."/>
            <person name="Buerckstuemmer T."/>
            <person name="Bennett K.L."/>
            <person name="Superti-Furga G."/>
            <person name="Colinge J."/>
        </authorList>
    </citation>
    <scope>IDENTIFICATION BY MASS SPECTROMETRY [LARGE SCALE ANALYSIS]</scope>
</reference>
<reference key="23">
    <citation type="journal article" date="2014" name="J. Proteomics">
        <title>An enzyme assisted RP-RPLC approach for in-depth analysis of human liver phosphoproteome.</title>
        <authorList>
            <person name="Bian Y."/>
            <person name="Song C."/>
            <person name="Cheng K."/>
            <person name="Dong M."/>
            <person name="Wang F."/>
            <person name="Huang J."/>
            <person name="Sun D."/>
            <person name="Wang L."/>
            <person name="Ye M."/>
            <person name="Zou H."/>
        </authorList>
    </citation>
    <scope>IDENTIFICATION BY MASS SPECTROMETRY [LARGE SCALE ANALYSIS]</scope>
    <source>
        <tissue>Liver</tissue>
    </source>
</reference>
<reference evidence="32 33" key="24">
    <citation type="journal article" date="2004" name="Biochemistry">
        <title>Crystal structure of human prostaglandin F synthase (AKR1C3).</title>
        <authorList>
            <person name="Komoto J."/>
            <person name="Yamada T."/>
            <person name="Watanabe K."/>
            <person name="Takusagawa F."/>
        </authorList>
    </citation>
    <scope>X-RAY CRYSTALLOGRAPHY (1.7 ANGSTROMS) IN COMPLEX WITH PROSTAGLANDIN H(2); NADPH AND RUTIN</scope>
    <scope>ACTIVITY REGULATION</scope>
</reference>
<reference evidence="34 35 36 37" key="25">
    <citation type="journal article" date="2004" name="Cancer Res.">
        <title>Crystal structures of prostaglandin D(2) 11-ketoreductase (AKR1C3) in complex with the nonsteroidal anti-inflammatory drugs flufenamic acid and indomethacin.</title>
        <authorList>
            <person name="Lovering A.L."/>
            <person name="Ride J.P."/>
            <person name="Bunce C.M."/>
            <person name="Desmond J.C."/>
            <person name="Cummings S.M."/>
            <person name="White S.A."/>
        </authorList>
    </citation>
    <scope>X-RAY CRYSTALLOGRAPHY (1.8 ANGSTROMS) IN COMPLEX WITH NADP; NADPFLUFENAMIC ACID AND INDOMETHACIN</scope>
    <scope>ACTIVITY REGULATION</scope>
</reference>
<reference evidence="38" key="26">
    <citation type="journal article" date="2004" name="Mol. Endocrinol.">
        <title>Crystal structures of the multispecific 17beta-hydroxysteroid dehydrogenase type 5: critical androgen regulation in human peripheral tissues.</title>
        <authorList>
            <person name="Qiu W."/>
            <person name="Zhou M."/>
            <person name="Labrie F."/>
            <person name="Lin S.-X."/>
        </authorList>
    </citation>
    <scope>X-RAY CRYSTALLOGRAPHY (2.0 ANGSTROMS) IN COMPLEX WITH NADP AND DELTA4-3 ANDROSTENE-3,17-DIONE</scope>
    <scope>IMPORTANCE OF TRP-227 AND PHE-306 IN LIGAND RECOGNITION AND PRODUCT RELEASE</scope>
</reference>
<keyword id="KW-0002">3D-structure</keyword>
<keyword id="KW-0025">Alternative splicing</keyword>
<keyword id="KW-0963">Cytoplasm</keyword>
<keyword id="KW-0443">Lipid metabolism</keyword>
<keyword id="KW-0520">NAD</keyword>
<keyword id="KW-0521">NADP</keyword>
<keyword id="KW-0560">Oxidoreductase</keyword>
<keyword id="KW-1267">Proteomics identification</keyword>
<keyword id="KW-1185">Reference proteome</keyword>
<accession>P42330</accession>
<accession>A8K2V0</accession>
<accession>B4DL37</accession>
<accession>Q5T2L1</accession>
<accession>Q96DJ1</accession>
<accession>Q96KI8</accession>
<accession>Q99530</accession>
<accession>Q9UCX1</accession>
<accession>Q9UII3</accession>
<accession>Q9UKL9</accession>
<proteinExistence type="evidence at protein level"/>
<evidence type="ECO:0000250" key="1"/>
<evidence type="ECO:0000250" key="2">
    <source>
        <dbReference type="UniProtKB" id="P14550"/>
    </source>
</evidence>
<evidence type="ECO:0000269" key="3">
    <source>
    </source>
</evidence>
<evidence type="ECO:0000269" key="4">
    <source>
    </source>
</evidence>
<evidence type="ECO:0000269" key="5">
    <source>
    </source>
</evidence>
<evidence type="ECO:0000269" key="6">
    <source>
    </source>
</evidence>
<evidence type="ECO:0000269" key="7">
    <source>
    </source>
</evidence>
<evidence type="ECO:0000269" key="8">
    <source>
    </source>
</evidence>
<evidence type="ECO:0000269" key="9">
    <source>
    </source>
</evidence>
<evidence type="ECO:0000269" key="10">
    <source>
    </source>
</evidence>
<evidence type="ECO:0000269" key="11">
    <source>
    </source>
</evidence>
<evidence type="ECO:0000269" key="12">
    <source>
    </source>
</evidence>
<evidence type="ECO:0000269" key="13">
    <source>
    </source>
</evidence>
<evidence type="ECO:0000269" key="14">
    <source>
    </source>
</evidence>
<evidence type="ECO:0000269" key="15">
    <source>
    </source>
</evidence>
<evidence type="ECO:0000269" key="16">
    <source>
    </source>
</evidence>
<evidence type="ECO:0000269" key="17">
    <source>
    </source>
</evidence>
<evidence type="ECO:0000269" key="18">
    <source>
    </source>
</evidence>
<evidence type="ECO:0000269" key="19">
    <source>
    </source>
</evidence>
<evidence type="ECO:0000269" key="20">
    <source>
    </source>
</evidence>
<evidence type="ECO:0000303" key="21">
    <source>
    </source>
</evidence>
<evidence type="ECO:0000303" key="22">
    <source>
    </source>
</evidence>
<evidence type="ECO:0000303" key="23">
    <source>
    </source>
</evidence>
<evidence type="ECO:0000305" key="24"/>
<evidence type="ECO:0000305" key="25">
    <source>
    </source>
</evidence>
<evidence type="ECO:0000305" key="26">
    <source>
    </source>
</evidence>
<evidence type="ECO:0000305" key="27">
    <source>
    </source>
</evidence>
<evidence type="ECO:0000305" key="28">
    <source>
    </source>
</evidence>
<evidence type="ECO:0000305" key="29">
    <source>
    </source>
</evidence>
<evidence type="ECO:0000305" key="30">
    <source>
    </source>
</evidence>
<evidence type="ECO:0000305" key="31">
    <source>
    </source>
</evidence>
<evidence type="ECO:0007744" key="32">
    <source>
        <dbReference type="PDB" id="1RY0"/>
    </source>
</evidence>
<evidence type="ECO:0007744" key="33">
    <source>
        <dbReference type="PDB" id="1RY8"/>
    </source>
</evidence>
<evidence type="ECO:0007744" key="34">
    <source>
        <dbReference type="PDB" id="1S1P"/>
    </source>
</evidence>
<evidence type="ECO:0007744" key="35">
    <source>
        <dbReference type="PDB" id="1S1R"/>
    </source>
</evidence>
<evidence type="ECO:0007744" key="36">
    <source>
        <dbReference type="PDB" id="1S2A"/>
    </source>
</evidence>
<evidence type="ECO:0007744" key="37">
    <source>
        <dbReference type="PDB" id="1S2C"/>
    </source>
</evidence>
<evidence type="ECO:0007744" key="38">
    <source>
        <dbReference type="PDB" id="1XF0"/>
    </source>
</evidence>
<evidence type="ECO:0007829" key="39">
    <source>
        <dbReference type="PDB" id="1S1P"/>
    </source>
</evidence>
<evidence type="ECO:0007829" key="40">
    <source>
        <dbReference type="PDB" id="1ZQ5"/>
    </source>
</evidence>
<evidence type="ECO:0007829" key="41">
    <source>
        <dbReference type="PDB" id="4WDU"/>
    </source>
</evidence>
<evidence type="ECO:0007829" key="42">
    <source>
        <dbReference type="PDB" id="4WRH"/>
    </source>
</evidence>
<evidence type="ECO:0007829" key="43">
    <source>
        <dbReference type="PDB" id="7X3L"/>
    </source>
</evidence>
<evidence type="ECO:0007829" key="44">
    <source>
        <dbReference type="PDB" id="7X3M"/>
    </source>
</evidence>
<name>AK1C3_HUMAN</name>
<gene>
    <name type="primary">AKR1C3</name>
    <name type="synonym">DDH1</name>
    <name type="synonym">HSD17B5</name>
    <name type="synonym">KIAA0119</name>
    <name evidence="21" type="synonym">PGFS</name>
</gene>
<feature type="chain" id="PRO_0000124638" description="Aldo-keto reductase family 1 member C3">
    <location>
        <begin position="1"/>
        <end position="323"/>
    </location>
</feature>
<feature type="active site" description="Proton donor" evidence="1">
    <location>
        <position position="55"/>
    </location>
</feature>
<feature type="binding site" evidence="8 9 11">
    <location>
        <begin position="23"/>
        <end position="24"/>
    </location>
    <ligand>
        <name>NADP(+)</name>
        <dbReference type="ChEBI" id="CHEBI:58349"/>
    </ligand>
</feature>
<feature type="binding site" evidence="8 9 11">
    <location>
        <position position="50"/>
    </location>
    <ligand>
        <name>NADP(+)</name>
        <dbReference type="ChEBI" id="CHEBI:58349"/>
    </ligand>
</feature>
<feature type="binding site" evidence="1">
    <location>
        <position position="117"/>
    </location>
    <ligand>
        <name>substrate</name>
    </ligand>
</feature>
<feature type="binding site" evidence="8 9 11">
    <location>
        <begin position="166"/>
        <end position="167"/>
    </location>
    <ligand>
        <name>NADP(+)</name>
        <dbReference type="ChEBI" id="CHEBI:58349"/>
    </ligand>
</feature>
<feature type="binding site" evidence="8 9 11">
    <location>
        <position position="190"/>
    </location>
    <ligand>
        <name>NADP(+)</name>
        <dbReference type="ChEBI" id="CHEBI:58349"/>
    </ligand>
</feature>
<feature type="binding site" evidence="8 9 11">
    <location>
        <begin position="216"/>
        <end position="222"/>
    </location>
    <ligand>
        <name>NADP(+)</name>
        <dbReference type="ChEBI" id="CHEBI:58349"/>
    </ligand>
</feature>
<feature type="binding site" evidence="8 9 11">
    <location>
        <begin position="270"/>
        <end position="272"/>
    </location>
    <ligand>
        <name>NADP(+)</name>
        <dbReference type="ChEBI" id="CHEBI:58349"/>
    </ligand>
</feature>
<feature type="binding site" evidence="8 9 11">
    <location>
        <begin position="276"/>
        <end position="280"/>
    </location>
    <ligand>
        <name>NADP(+)</name>
        <dbReference type="ChEBI" id="CHEBI:58349"/>
    </ligand>
</feature>
<feature type="site" description="Important for substrate specificity" evidence="1">
    <location>
        <position position="54"/>
    </location>
</feature>
<feature type="site" description="Lowers pKa of active site Tyr" evidence="2">
    <location>
        <position position="84"/>
    </location>
</feature>
<feature type="site" description="Involved in ligand recognition and product release" evidence="11">
    <location>
        <position position="227"/>
    </location>
</feature>
<feature type="site" description="Involved in ligand recognition and product release" evidence="11">
    <location>
        <position position="306"/>
    </location>
</feature>
<feature type="splice variant" id="VSP_055798" description="In isoform 2." evidence="23">
    <location>
        <begin position="1"/>
        <end position="119"/>
    </location>
</feature>
<feature type="sequence variant" id="VAR_013288" description="In dbSNP:rs12529." evidence="3 4 15 16 17 18 19">
    <original>H</original>
    <variation>Q</variation>
    <location>
        <position position="5"/>
    </location>
</feature>
<feature type="sequence variant" id="VAR_032767" description="In dbSNP:rs35961894.">
    <original>R</original>
    <variation>Q</variation>
    <location>
        <position position="66"/>
    </location>
</feature>
<feature type="sequence variant" id="VAR_061001" description="In dbSNP:rs11551177.">
    <original>E</original>
    <variation>G</variation>
    <location>
        <position position="77"/>
    </location>
</feature>
<feature type="sequence variant" id="VAR_032768" description="In dbSNP:rs35575889.">
    <original>R</original>
    <variation>C</variation>
    <location>
        <position position="170"/>
    </location>
</feature>
<feature type="sequence variant" id="VAR_013289" description="No effect on 17beta-HSD activity; dbSNP:rs1131132." evidence="16 18 20">
    <original>M</original>
    <variation>I</variation>
    <location>
        <position position="175"/>
    </location>
</feature>
<feature type="sequence variant" id="VAR_032769" description="In dbSNP:rs34186955.">
    <original>P</original>
    <variation>S</variation>
    <location>
        <position position="180"/>
    </location>
</feature>
<feature type="mutagenesis site" description="No effect on 17beta-HSD activity." evidence="20">
    <original>K</original>
    <variation>E</variation>
    <location>
        <position position="75"/>
    </location>
</feature>
<feature type="mutagenesis site" description="Decreases in the retinaldehyde reductase activity. 3-fold decrease in the kcat value, whereas the KM value does not vary." evidence="14">
    <original>R</original>
    <variation>P</variation>
    <location>
        <position position="226"/>
    </location>
</feature>
<feature type="mutagenesis site" description="Decrease in the retinaldehyde reductase activity. Exhibits changes in both KM and kcat values." evidence="14">
    <original>R</original>
    <variation>Q</variation>
    <location>
        <position position="226"/>
    </location>
</feature>
<feature type="sequence conflict" description="In Ref. 3; no nucleotide entry." evidence="24" ref="3">
    <original>S</original>
    <variation>P</variation>
    <location>
        <position position="3"/>
    </location>
</feature>
<feature type="sequence conflict" description="In Ref. 3; no nucleotide entry." evidence="24" ref="3">
    <original>Q</original>
    <variation>K</variation>
    <location>
        <position position="6"/>
    </location>
</feature>
<feature type="sequence conflict" description="In Ref. 6; AAF07272." evidence="24" ref="6">
    <original>T</original>
    <variation>S</variation>
    <location>
        <position position="38"/>
    </location>
</feature>
<feature type="sequence conflict" description="In Ref. 1; AAD14011 and 3; no nucleotide entry." evidence="24" ref="1 3">
    <original>K</original>
    <variation>E</variation>
    <location>
        <position position="75"/>
    </location>
</feature>
<feature type="sequence conflict" description="In Ref. 2; AAB41916." evidence="24" ref="2">
    <original>K</original>
    <variation>M</variation>
    <location>
        <position position="75"/>
    </location>
</feature>
<feature type="sequence conflict" description="In Ref. 6; AAF07272." evidence="24" ref="6">
    <original>F</original>
    <variation>S</variation>
    <location>
        <position position="89"/>
    </location>
</feature>
<feature type="sequence conflict" description="In Ref. 6; AAF07272." evidence="24" ref="6">
    <original>K</original>
    <variation>R</variation>
    <location>
        <position position="270"/>
    </location>
</feature>
<feature type="helix" evidence="43">
    <location>
        <begin position="3"/>
        <end position="5"/>
    </location>
</feature>
<feature type="strand" evidence="39">
    <location>
        <begin position="7"/>
        <end position="9"/>
    </location>
</feature>
<feature type="strand" evidence="39">
    <location>
        <begin position="15"/>
        <end position="22"/>
    </location>
</feature>
<feature type="helix" evidence="39">
    <location>
        <begin position="33"/>
        <end position="44"/>
    </location>
</feature>
<feature type="strand" evidence="39">
    <location>
        <begin position="48"/>
        <end position="50"/>
    </location>
</feature>
<feature type="helix" evidence="39">
    <location>
        <begin position="53"/>
        <end position="55"/>
    </location>
</feature>
<feature type="helix" evidence="39">
    <location>
        <begin position="58"/>
        <end position="70"/>
    </location>
</feature>
<feature type="helix" evidence="39">
    <location>
        <begin position="76"/>
        <end position="78"/>
    </location>
</feature>
<feature type="strand" evidence="39">
    <location>
        <begin position="80"/>
        <end position="85"/>
    </location>
</feature>
<feature type="helix" evidence="39">
    <location>
        <begin position="87"/>
        <end position="89"/>
    </location>
</feature>
<feature type="helix" evidence="39">
    <location>
        <begin position="92"/>
        <end position="94"/>
    </location>
</feature>
<feature type="helix" evidence="39">
    <location>
        <begin position="95"/>
        <end position="106"/>
    </location>
</feature>
<feature type="strand" evidence="39">
    <location>
        <begin position="111"/>
        <end position="116"/>
    </location>
</feature>
<feature type="strand" evidence="40">
    <location>
        <begin position="124"/>
        <end position="126"/>
    </location>
</feature>
<feature type="strand" evidence="41">
    <location>
        <begin position="133"/>
        <end position="135"/>
    </location>
</feature>
<feature type="helix" evidence="39">
    <location>
        <begin position="144"/>
        <end position="156"/>
    </location>
</feature>
<feature type="strand" evidence="39">
    <location>
        <begin position="159"/>
        <end position="167"/>
    </location>
</feature>
<feature type="helix" evidence="39">
    <location>
        <begin position="170"/>
        <end position="177"/>
    </location>
</feature>
<feature type="strand" evidence="39">
    <location>
        <begin position="187"/>
        <end position="192"/>
    </location>
</feature>
<feature type="helix" evidence="44">
    <location>
        <begin position="195"/>
        <end position="197"/>
    </location>
</feature>
<feature type="helix" evidence="39">
    <location>
        <begin position="200"/>
        <end position="208"/>
    </location>
</feature>
<feature type="strand" evidence="39">
    <location>
        <begin position="212"/>
        <end position="217"/>
    </location>
</feature>
<feature type="turn" evidence="39">
    <location>
        <begin position="225"/>
        <end position="227"/>
    </location>
</feature>
<feature type="helix" evidence="39">
    <location>
        <begin position="235"/>
        <end position="237"/>
    </location>
</feature>
<feature type="helix" evidence="39">
    <location>
        <begin position="239"/>
        <end position="248"/>
    </location>
</feature>
<feature type="helix" evidence="39">
    <location>
        <begin position="252"/>
        <end position="262"/>
    </location>
</feature>
<feature type="strand" evidence="39">
    <location>
        <begin position="266"/>
        <end position="270"/>
    </location>
</feature>
<feature type="helix" evidence="39">
    <location>
        <begin position="274"/>
        <end position="280"/>
    </location>
</feature>
<feature type="helix" evidence="39">
    <location>
        <begin position="281"/>
        <end position="285"/>
    </location>
</feature>
<feature type="helix" evidence="39">
    <location>
        <begin position="290"/>
        <end position="297"/>
    </location>
</feature>
<feature type="helix" evidence="39">
    <location>
        <begin position="309"/>
        <end position="312"/>
    </location>
</feature>
<feature type="helix" evidence="42">
    <location>
        <begin position="318"/>
        <end position="320"/>
    </location>
</feature>
<comment type="function">
    <text evidence="3 4 5 6 7 10 12 13 14 16 19 20">Cytosolic aldo-keto reductase that catalyzes the NADH and NADPH-dependent reduction of ketosteroids to hydroxysteroids. Acts as a NAD(P)(H)-dependent 3-, 17- and 20-ketosteroid reductase on the steroid nucleus and side chain and regulates the metabolism of androgens, estrogens and progesterone (PubMed:10622721, PubMed:11165022, PubMed:7650035, PubMed:9415401, PubMed:9927279). Displays the ability to catalyze both oxidation and reduction in vitro, but most probably acts as a reductase in vivo since the oxidase activity measured in vitro is inhibited by physiological concentration of NADPH (PubMed:11165022, PubMed:14672942). Acts preferentially as a 17-ketosteroid reductase and has the highest catalytic efficiency of the AKR1C enzyme for the reduction of delta4-androstenedione to form testosterone (PubMed:20036328). Reduces prostaglandin (PG) D2 to 11beta-prostaglandin F2, progesterone to 20alpha-hydroxyprogesterone and estrone to 17beta-estradiol (PubMed:10622721, PubMed:10998348, PubMed:11165022, PubMed:15047184, PubMed:19010934, PubMed:20036328). Catalyzes the transformation of the potent androgen dihydrotestosterone (DHT) into the less active form, 5-alpha-androstan-3-alpha,17-beta-diol (3-alpha-diol) (PubMed:10557352, PubMed:10998348, PubMed:11165022, PubMed:14672942, PubMed:7650035, PubMed:9415401). Also displays retinaldehyde reductase activity toward 9-cis-retinal (PubMed:21851338).</text>
</comment>
<comment type="catalytic activity">
    <reaction evidence="6 16 19 20">
        <text>a 3alpha-hydroxysteroid + NADP(+) = a 3-oxosteroid + NADPH + H(+)</text>
        <dbReference type="Rhea" id="RHEA:34783"/>
        <dbReference type="ChEBI" id="CHEBI:15378"/>
        <dbReference type="ChEBI" id="CHEBI:36835"/>
        <dbReference type="ChEBI" id="CHEBI:47788"/>
        <dbReference type="ChEBI" id="CHEBI:57783"/>
        <dbReference type="ChEBI" id="CHEBI:58349"/>
        <dbReference type="EC" id="1.1.1.357"/>
    </reaction>
</comment>
<comment type="catalytic activity">
    <reaction evidence="6 16 19 20">
        <text>a 3alpha-hydroxysteroid + NAD(+) = a 3-oxosteroid + NADH + H(+)</text>
        <dbReference type="Rhea" id="RHEA:34779"/>
        <dbReference type="ChEBI" id="CHEBI:15378"/>
        <dbReference type="ChEBI" id="CHEBI:36835"/>
        <dbReference type="ChEBI" id="CHEBI:47788"/>
        <dbReference type="ChEBI" id="CHEBI:57540"/>
        <dbReference type="ChEBI" id="CHEBI:57945"/>
        <dbReference type="EC" id="1.1.1.357"/>
    </reaction>
</comment>
<comment type="catalytic activity">
    <reaction evidence="4 6 16 19 20">
        <text>prostaglandin F2alpha + NADP(+) = prostaglandin D2 + NADPH + H(+)</text>
        <dbReference type="Rhea" id="RHEA:10140"/>
        <dbReference type="ChEBI" id="CHEBI:15378"/>
        <dbReference type="ChEBI" id="CHEBI:57404"/>
        <dbReference type="ChEBI" id="CHEBI:57406"/>
        <dbReference type="ChEBI" id="CHEBI:57783"/>
        <dbReference type="ChEBI" id="CHEBI:58349"/>
        <dbReference type="EC" id="1.1.1.188"/>
    </reaction>
</comment>
<comment type="catalytic activity">
    <reaction evidence="10 12">
        <text>prostaglandin F2alpha + NADP(+) = prostaglandin H2 + NADPH + H(+)</text>
        <dbReference type="Rhea" id="RHEA:45312"/>
        <dbReference type="ChEBI" id="CHEBI:15378"/>
        <dbReference type="ChEBI" id="CHEBI:57404"/>
        <dbReference type="ChEBI" id="CHEBI:57405"/>
        <dbReference type="ChEBI" id="CHEBI:57783"/>
        <dbReference type="ChEBI" id="CHEBI:58349"/>
    </reaction>
    <physiologicalReaction direction="right-to-left" evidence="28 29">
        <dbReference type="Rhea" id="RHEA:45314"/>
    </physiologicalReaction>
</comment>
<comment type="catalytic activity">
    <reaction evidence="4 10 13">
        <text>prostaglandin D2 + NADPH + H(+) = 11beta-prostaglandin F2 + NADP(+)</text>
        <dbReference type="Rhea" id="RHEA:45316"/>
        <dbReference type="ChEBI" id="CHEBI:15378"/>
        <dbReference type="ChEBI" id="CHEBI:57406"/>
        <dbReference type="ChEBI" id="CHEBI:57783"/>
        <dbReference type="ChEBI" id="CHEBI:58349"/>
        <dbReference type="ChEBI" id="CHEBI:85173"/>
    </reaction>
    <physiologicalReaction direction="left-to-right" evidence="25 30">
        <dbReference type="Rhea" id="RHEA:45317"/>
    </physiologicalReaction>
    <physiologicalReaction direction="right-to-left" evidence="25">
        <dbReference type="Rhea" id="RHEA:45318"/>
    </physiologicalReaction>
</comment>
<comment type="catalytic activity">
    <reaction evidence="10">
        <text>prostaglandin D2-ethanolamide + NADPH + H(+) = 11beta-prostaglandin F2-ethanolamide + NADP(+)</text>
        <dbReference type="Rhea" id="RHEA:45308"/>
        <dbReference type="ChEBI" id="CHEBI:15378"/>
        <dbReference type="ChEBI" id="CHEBI:57783"/>
        <dbReference type="ChEBI" id="CHEBI:58349"/>
        <dbReference type="ChEBI" id="CHEBI:85174"/>
        <dbReference type="ChEBI" id="CHEBI:85175"/>
    </reaction>
    <physiologicalReaction direction="left-to-right" evidence="28">
        <dbReference type="Rhea" id="RHEA:45309"/>
    </physiologicalReaction>
</comment>
<comment type="catalytic activity">
    <reaction evidence="5 6 19 20">
        <text>testosterone + NAD(+) = androst-4-ene-3,17-dione + NADH + H(+)</text>
        <dbReference type="Rhea" id="RHEA:14929"/>
        <dbReference type="ChEBI" id="CHEBI:15378"/>
        <dbReference type="ChEBI" id="CHEBI:16422"/>
        <dbReference type="ChEBI" id="CHEBI:17347"/>
        <dbReference type="ChEBI" id="CHEBI:57540"/>
        <dbReference type="ChEBI" id="CHEBI:57945"/>
        <dbReference type="EC" id="1.1.1.239"/>
    </reaction>
    <physiologicalReaction direction="left-to-right" evidence="26">
        <dbReference type="Rhea" id="RHEA:14930"/>
    </physiologicalReaction>
    <physiologicalReaction direction="right-to-left" evidence="26">
        <dbReference type="Rhea" id="RHEA:14931"/>
    </physiologicalReaction>
</comment>
<comment type="catalytic activity">
    <reaction evidence="5 6 13 19 20">
        <text>testosterone + NADP(+) = androst-4-ene-3,17-dione + NADPH + H(+)</text>
        <dbReference type="Rhea" id="RHEA:14981"/>
        <dbReference type="ChEBI" id="CHEBI:15378"/>
        <dbReference type="ChEBI" id="CHEBI:16422"/>
        <dbReference type="ChEBI" id="CHEBI:17347"/>
        <dbReference type="ChEBI" id="CHEBI:57783"/>
        <dbReference type="ChEBI" id="CHEBI:58349"/>
        <dbReference type="EC" id="1.1.1.64"/>
    </reaction>
    <physiologicalReaction direction="left-to-right" evidence="26">
        <dbReference type="Rhea" id="RHEA:14982"/>
    </physiologicalReaction>
    <physiologicalReaction direction="right-to-left" evidence="26 30">
        <dbReference type="Rhea" id="RHEA:14983"/>
    </physiologicalReaction>
</comment>
<comment type="catalytic activity">
    <reaction evidence="5 6 13">
        <text>17beta-estradiol + NADP(+) = estrone + NADPH + H(+)</text>
        <dbReference type="Rhea" id="RHEA:24616"/>
        <dbReference type="ChEBI" id="CHEBI:15378"/>
        <dbReference type="ChEBI" id="CHEBI:16469"/>
        <dbReference type="ChEBI" id="CHEBI:17263"/>
        <dbReference type="ChEBI" id="CHEBI:57783"/>
        <dbReference type="ChEBI" id="CHEBI:58349"/>
        <dbReference type="EC" id="1.1.1.62"/>
    </reaction>
    <physiologicalReaction direction="left-to-right" evidence="26">
        <dbReference type="Rhea" id="RHEA:24617"/>
    </physiologicalReaction>
    <physiologicalReaction direction="right-to-left" evidence="26 30">
        <dbReference type="Rhea" id="RHEA:24618"/>
    </physiologicalReaction>
</comment>
<comment type="catalytic activity">
    <reaction evidence="5">
        <text>17beta-estradiol + NAD(+) = estrone + NADH + H(+)</text>
        <dbReference type="Rhea" id="RHEA:24612"/>
        <dbReference type="ChEBI" id="CHEBI:15378"/>
        <dbReference type="ChEBI" id="CHEBI:16469"/>
        <dbReference type="ChEBI" id="CHEBI:17263"/>
        <dbReference type="ChEBI" id="CHEBI:57540"/>
        <dbReference type="ChEBI" id="CHEBI:57945"/>
        <dbReference type="EC" id="1.1.1.62"/>
    </reaction>
    <physiologicalReaction direction="left-to-right" evidence="26">
        <dbReference type="Rhea" id="RHEA:24613"/>
    </physiologicalReaction>
    <physiologicalReaction direction="right-to-left" evidence="26">
        <dbReference type="Rhea" id="RHEA:24614"/>
    </physiologicalReaction>
</comment>
<comment type="catalytic activity">
    <reaction evidence="5 13">
        <text>(20S)-hydroxypregn-4-en-3-one + NADP(+) = progesterone + NADPH + H(+)</text>
        <dbReference type="Rhea" id="RHEA:42112"/>
        <dbReference type="ChEBI" id="CHEBI:15378"/>
        <dbReference type="ChEBI" id="CHEBI:17026"/>
        <dbReference type="ChEBI" id="CHEBI:28453"/>
        <dbReference type="ChEBI" id="CHEBI:57783"/>
        <dbReference type="ChEBI" id="CHEBI:58349"/>
    </reaction>
    <physiologicalReaction direction="left-to-right" evidence="26">
        <dbReference type="Rhea" id="RHEA:42113"/>
    </physiologicalReaction>
    <physiologicalReaction direction="right-to-left" evidence="26 30">
        <dbReference type="Rhea" id="RHEA:42114"/>
    </physiologicalReaction>
</comment>
<comment type="catalytic activity">
    <reaction evidence="5">
        <text>(20S)-hydroxypregn-4-en-3-one + NAD(+) = progesterone + NADH + H(+)</text>
        <dbReference type="Rhea" id="RHEA:42108"/>
        <dbReference type="ChEBI" id="CHEBI:15378"/>
        <dbReference type="ChEBI" id="CHEBI:17026"/>
        <dbReference type="ChEBI" id="CHEBI:28453"/>
        <dbReference type="ChEBI" id="CHEBI:57540"/>
        <dbReference type="ChEBI" id="CHEBI:57945"/>
    </reaction>
    <physiologicalReaction direction="left-to-right" evidence="26">
        <dbReference type="Rhea" id="RHEA:42109"/>
    </physiologicalReaction>
    <physiologicalReaction direction="right-to-left" evidence="26 30">
        <dbReference type="Rhea" id="RHEA:42110"/>
    </physiologicalReaction>
</comment>
<comment type="catalytic activity">
    <reaction evidence="3 5 6 7 16 19">
        <text>5alpha-androstane-3alpha,17beta-diol + NADP(+) = 17beta-hydroxy-5alpha-androstan-3-one + NADPH + H(+)</text>
        <dbReference type="Rhea" id="RHEA:42116"/>
        <dbReference type="ChEBI" id="CHEBI:15378"/>
        <dbReference type="ChEBI" id="CHEBI:16330"/>
        <dbReference type="ChEBI" id="CHEBI:36713"/>
        <dbReference type="ChEBI" id="CHEBI:57783"/>
        <dbReference type="ChEBI" id="CHEBI:58349"/>
    </reaction>
    <physiologicalReaction direction="right-to-left" evidence="26 27">
        <dbReference type="Rhea" id="RHEA:42118"/>
    </physiologicalReaction>
</comment>
<comment type="catalytic activity">
    <reaction evidence="5">
        <text>5alpha-androstane-3alpha,17beta-diol + NAD(+) = 17beta-hydroxy-5alpha-androstan-3-one + NADH + H(+)</text>
        <dbReference type="Rhea" id="RHEA:42004"/>
        <dbReference type="ChEBI" id="CHEBI:15378"/>
        <dbReference type="ChEBI" id="CHEBI:16330"/>
        <dbReference type="ChEBI" id="CHEBI:36713"/>
        <dbReference type="ChEBI" id="CHEBI:57540"/>
        <dbReference type="ChEBI" id="CHEBI:57945"/>
        <dbReference type="EC" id="1.1.1.53"/>
    </reaction>
    <physiologicalReaction direction="right-to-left" evidence="26">
        <dbReference type="Rhea" id="RHEA:42006"/>
    </physiologicalReaction>
</comment>
<comment type="catalytic activity">
    <reaction evidence="3 5 19">
        <text>androsterone + NADPH + H(+) = 5alpha-androstane-3alpha,17beta-diol + NADP(+)</text>
        <dbReference type="Rhea" id="RHEA:42156"/>
        <dbReference type="ChEBI" id="CHEBI:15378"/>
        <dbReference type="ChEBI" id="CHEBI:16032"/>
        <dbReference type="ChEBI" id="CHEBI:36713"/>
        <dbReference type="ChEBI" id="CHEBI:57783"/>
        <dbReference type="ChEBI" id="CHEBI:58349"/>
    </reaction>
    <physiologicalReaction direction="left-to-right" evidence="26">
        <dbReference type="Rhea" id="RHEA:42157"/>
    </physiologicalReaction>
    <physiologicalReaction direction="right-to-left" evidence="26">
        <dbReference type="Rhea" id="RHEA:42158"/>
    </physiologicalReaction>
</comment>
<comment type="catalytic activity">
    <reaction evidence="5 7 19">
        <text>5alpha-androstane-3alpha,17beta-diol + NAD(+) = androsterone + NADH + H(+)</text>
        <dbReference type="Rhea" id="RHEA:42124"/>
        <dbReference type="ChEBI" id="CHEBI:15378"/>
        <dbReference type="ChEBI" id="CHEBI:16032"/>
        <dbReference type="ChEBI" id="CHEBI:36713"/>
        <dbReference type="ChEBI" id="CHEBI:57540"/>
        <dbReference type="ChEBI" id="CHEBI:57945"/>
    </reaction>
    <physiologicalReaction direction="left-to-right" evidence="26 27">
        <dbReference type="Rhea" id="RHEA:42125"/>
    </physiologicalReaction>
</comment>
<comment type="catalytic activity">
    <reaction evidence="7">
        <text>5alpha-androstane-3beta,17beta-diol + NADP(+) = 17beta-hydroxy-5alpha-androstan-3-one + NADPH + H(+)</text>
        <dbReference type="Rhea" id="RHEA:16297"/>
        <dbReference type="ChEBI" id="CHEBI:15378"/>
        <dbReference type="ChEBI" id="CHEBI:16330"/>
        <dbReference type="ChEBI" id="CHEBI:18329"/>
        <dbReference type="ChEBI" id="CHEBI:57783"/>
        <dbReference type="ChEBI" id="CHEBI:58349"/>
        <dbReference type="EC" id="1.1.1.210"/>
    </reaction>
    <physiologicalReaction direction="right-to-left" evidence="27">
        <dbReference type="Rhea" id="RHEA:16299"/>
    </physiologicalReaction>
</comment>
<comment type="catalytic activity">
    <reaction evidence="14">
        <text>9-cis-retinol + NADP(+) = 9-cis-retinal + NADPH + H(+)</text>
        <dbReference type="Rhea" id="RHEA:54916"/>
        <dbReference type="ChEBI" id="CHEBI:15378"/>
        <dbReference type="ChEBI" id="CHEBI:57783"/>
        <dbReference type="ChEBI" id="CHEBI:58349"/>
        <dbReference type="ChEBI" id="CHEBI:78272"/>
        <dbReference type="ChEBI" id="CHEBI:78273"/>
    </reaction>
    <physiologicalReaction direction="right-to-left" evidence="31">
        <dbReference type="Rhea" id="RHEA:54918"/>
    </physiologicalReaction>
</comment>
<comment type="activity regulation">
    <text evidence="3 7 8 9">Strongly inhibited by nonsteroidal anti-inflammatory drugs (NSAID) including flufenamic acid and indomethacin. Also inhibited by the flavinoid, rutin, and by selective serotonin inhibitors (SSRIs) (PubMed:10557352, PubMed:14979715, PubMed:14996743). The oxidation reaction is inhibited by low micromolar concentrations of NADPH (PubMed:14672942).</text>
</comment>
<comment type="biophysicochemical properties">
    <kinetics>
        <KM evidence="5">11.9 uM for 17beta-hydroxy-5alpha-androstan-3-one (in the oxidation assay)</KM>
        <KM evidence="5 6">26.2 uM for 17beta-hydroxy-5alpha-androstan-3-one</KM>
        <KM evidence="19">19 uM for 17beta-hydroxy-5alpha-androstan-3-one</KM>
        <KM evidence="5">8.96 uM for 3alpha-hydroxy-5alpha-androstan-17-one (in the reduction assay)</KM>
        <KM evidence="12">17.5 uM for prostaglandin H2</KM>
        <KM evidence="14">0.3 uM for 9-cis-retinol</KM>
        <KM evidence="14">0.4 uM for 9-cis-retinal</KM>
        <KM evidence="3">142.1 uM for progesterone</KM>
        <KM evidence="3">2.37 uM for 17beta-hydroxy-5alpha-androstan-3-one</KM>
        <KM evidence="3">1 uM for androstanediol</KM>
        <KM evidence="5">5 uM for 5alpha-androstan-3,17-dione</KM>
        <KM evidence="5">24.3 uM for testosterone (in the oxidation assay)</KM>
        <KM evidence="5">27.2 uM for 5alpha-androstane-3alpha,17beta-diol</KM>
        <Vmax evidence="12">3.9 nmol/min/mg enzyme with prostaglandin H2 as substrate</Vmax>
        <Vmax evidence="3">20.1 nmol/min/mg enzyme with progesterone as substrate</Vmax>
        <Vmax evidence="19">2.45 nmol/min/mg enzyme for 7beta-hydroxy-5alpha-androstan-3-one</Vmax>
        <Vmax evidence="3">1.8 nmol/min/mg enzyme with 17beta-hydroxy-5alpha-androstan-3-one as substrate</Vmax>
        <Vmax evidence="5">4.18 nmol/min/mg enzyme for 17beta-hydroxy-5alpha-androstan-3-one reduction</Vmax>
        <Vmax evidence="5">3.99 nmol/min/mg enzyme for 5alpha-androstane-3alpha,17beta-diol oxidation</Vmax>
        <Vmax evidence="5">48.4 nmol/min/mg enzyme for 5alpha-androstan-3,17-dione reduction</Vmax>
        <Vmax evidence="5">10.2 nmol/min/mg enzyme for 3alpha-hydroxy-5alpha-androstan-17-one reduction</Vmax>
        <Vmax evidence="5">1.34 nmol/min/mg enzyme for testosterone oxydation</Vmax>
        <Vmax evidence="3">4.4 nmol/min/mg enzyme with androstanediol as substrate</Vmax>
        <text evidence="5 14">kcat is 0.044 min(-1) for testosterone oxydation (PubMed:10998348). kcat is 13 min(-1) for 9-cis-retinal as substrate (PubMed:21851338). kcat is 4.18 min(-1) for 17beta-hydroxy-5alpha-androstan-3-one reduction (PubMed:10998348). kcat is 0.37 min(-1) for 3alpha-hydroxy-5alpha-androstan-17-one reduction (PubMed:10998348). kcat is 0.046 min(-1) for 17beta-hydroxy-5alpha-androstan-3-one oxydation (PubMed:10998348).</text>
    </kinetics>
</comment>
<comment type="pathway">
    <text evidence="7">Steroid metabolism.</text>
</comment>
<comment type="interaction">
    <interactant intactId="EBI-712656">
        <id>P42330</id>
    </interactant>
    <interactant intactId="EBI-21734635">
        <id>P17516</id>
        <label>AKR1C4</label>
    </interactant>
    <organismsDiffer>false</organismsDiffer>
    <experiments>3</experiments>
</comment>
<comment type="subcellular location">
    <subcellularLocation>
        <location evidence="4">Cytoplasm</location>
    </subcellularLocation>
</comment>
<comment type="alternative products">
    <event type="alternative splicing"/>
    <isoform>
        <id>P42330-1</id>
        <name>1</name>
        <sequence type="displayed"/>
    </isoform>
    <isoform>
        <id>P42330-2</id>
        <name>2</name>
        <sequence type="described" ref="VSP_055798"/>
    </isoform>
</comment>
<comment type="tissue specificity">
    <text evidence="3 4 6 16 19 20">Expressed in many tissues including adrenal gland, brain, kidney, liver, lung, mammary gland, placenta, small intestine, colon, spleen, prostate and testis. High expression in prostate and mammary gland. In the prostate, higher levels in epithelial cells than in stromal cells. In the brain, expressed in medulla, spinal cord, frontotemporal lobes, thalamus, subthalamic nuclei and amygdala. Weaker expression in the hippocampus, substantia nigra and caudate.</text>
</comment>
<comment type="similarity">
    <text evidence="24">Belongs to the aldo/keto reductase family.</text>
</comment>
<comment type="sequence caution" evidence="24">
    <conflict type="erroneous initiation">
        <sequence resource="EMBL-CDS" id="BAA04619"/>
    </conflict>
    <text>Truncated N-terminus.</text>
</comment>
<comment type="online information" name="Atlas of Genetics and Cytogenetics in Oncology and Haematology">
    <link uri="https://atlasgeneticsoncology.org/gene/612/AKR1C3"/>
</comment>
<protein>
    <recommendedName>
        <fullName>Aldo-keto reductase family 1 member C3</fullName>
        <ecNumber evidence="4 5 6 7 13 16 19 20">1.1.1.-</ecNumber>
        <ecNumber evidence="7">1.1.1.210</ecNumber>
        <ecNumber evidence="5 7">1.1.1.53</ecNumber>
        <ecNumber evidence="5">1.1.1.62</ecNumber>
    </recommendedName>
    <alternativeName>
        <fullName evidence="22">17-beta-hydroxysteroid dehydrogenase type 5</fullName>
        <shortName>17-beta-HSD 5</shortName>
    </alternativeName>
    <alternativeName>
        <fullName>3-alpha-HSD type II, brain</fullName>
    </alternativeName>
    <alternativeName>
        <fullName>3-alpha-hydroxysteroid dehydrogenase type 2</fullName>
        <shortName>3-alpha-HSD type 2</shortName>
        <ecNumber evidence="6 16 19 20">1.1.1.357</ecNumber>
    </alternativeName>
    <alternativeName>
        <fullName>Chlordecone reductase homolog HAKRb</fullName>
    </alternativeName>
    <alternativeName>
        <fullName>Dihydrodiol dehydrogenase 3</fullName>
        <shortName>DD-3</shortName>
        <shortName>DD3</shortName>
    </alternativeName>
    <alternativeName>
        <fullName>Dihydrodiol dehydrogenase type I</fullName>
    </alternativeName>
    <alternativeName>
        <fullName>HA1753</fullName>
    </alternativeName>
    <alternativeName>
        <fullName evidence="21">Prostaglandin F synthase</fullName>
        <shortName evidence="21">PGFS</shortName>
        <ecNumber evidence="4 6 16 19 20">1.1.1.188</ecNumber>
    </alternativeName>
    <alternativeName>
        <fullName>Testosterone 17-beta-dehydrogenase 5</fullName>
        <ecNumber evidence="5 6 19 20">1.1.1.239</ecNumber>
        <ecNumber evidence="5 6 13 19 20">1.1.1.64</ecNumber>
    </alternativeName>
</protein>
<organism>
    <name type="scientific">Homo sapiens</name>
    <name type="common">Human</name>
    <dbReference type="NCBI Taxonomy" id="9606"/>
    <lineage>
        <taxon>Eukaryota</taxon>
        <taxon>Metazoa</taxon>
        <taxon>Chordata</taxon>
        <taxon>Craniata</taxon>
        <taxon>Vertebrata</taxon>
        <taxon>Euteleostomi</taxon>
        <taxon>Mammalia</taxon>
        <taxon>Eutheria</taxon>
        <taxon>Euarchontoglires</taxon>
        <taxon>Primates</taxon>
        <taxon>Haplorrhini</taxon>
        <taxon>Catarrhini</taxon>
        <taxon>Hominidae</taxon>
        <taxon>Homo</taxon>
    </lineage>
</organism>
<dbReference type="EC" id="1.1.1.-" evidence="4 5 6 7 13 16 19 20"/>
<dbReference type="EC" id="1.1.1.210" evidence="7"/>
<dbReference type="EC" id="1.1.1.53" evidence="5 7"/>
<dbReference type="EC" id="1.1.1.62" evidence="5"/>
<dbReference type="EC" id="1.1.1.357" evidence="6 16 19 20"/>
<dbReference type="EC" id="1.1.1.188" evidence="4 6 16 19 20"/>
<dbReference type="EC" id="1.1.1.239" evidence="5 6 19 20"/>
<dbReference type="EC" id="1.1.1.64" evidence="5 6 13 19 20"/>
<dbReference type="EMBL" id="S68288">
    <property type="protein sequence ID" value="AAD14011.1"/>
    <property type="molecule type" value="mRNA"/>
</dbReference>
<dbReference type="EMBL" id="L43839">
    <property type="protein sequence ID" value="AAB41916.1"/>
    <property type="molecule type" value="Genomic_DNA"/>
</dbReference>
<dbReference type="EMBL" id="L43831">
    <property type="protein sequence ID" value="AAB41916.1"/>
    <property type="status" value="JOINED"/>
    <property type="molecule type" value="Genomic_DNA"/>
</dbReference>
<dbReference type="EMBL" id="L43832">
    <property type="protein sequence ID" value="AAB41916.1"/>
    <property type="status" value="JOINED"/>
    <property type="molecule type" value="Genomic_DNA"/>
</dbReference>
<dbReference type="EMBL" id="L43833">
    <property type="protein sequence ID" value="AAB41916.1"/>
    <property type="status" value="JOINED"/>
    <property type="molecule type" value="Genomic_DNA"/>
</dbReference>
<dbReference type="EMBL" id="L43834">
    <property type="protein sequence ID" value="AAB41916.1"/>
    <property type="status" value="JOINED"/>
    <property type="molecule type" value="Genomic_DNA"/>
</dbReference>
<dbReference type="EMBL" id="L43835">
    <property type="protein sequence ID" value="AAB41916.1"/>
    <property type="status" value="JOINED"/>
    <property type="molecule type" value="Genomic_DNA"/>
</dbReference>
<dbReference type="EMBL" id="L43836">
    <property type="protein sequence ID" value="AAB41916.1"/>
    <property type="status" value="JOINED"/>
    <property type="molecule type" value="Genomic_DNA"/>
</dbReference>
<dbReference type="EMBL" id="L43837">
    <property type="protein sequence ID" value="AAB41916.1"/>
    <property type="status" value="JOINED"/>
    <property type="molecule type" value="Genomic_DNA"/>
</dbReference>
<dbReference type="EMBL" id="L43838">
    <property type="protein sequence ID" value="AAB41916.1"/>
    <property type="status" value="JOINED"/>
    <property type="molecule type" value="Genomic_DNA"/>
</dbReference>
<dbReference type="EMBL" id="AB018580">
    <property type="protein sequence ID" value="BAA88488.1"/>
    <property type="molecule type" value="mRNA"/>
</dbReference>
<dbReference type="EMBL" id="AB028065">
    <property type="protein sequence ID" value="BAA88489.1"/>
    <property type="molecule type" value="Genomic_DNA"/>
</dbReference>
<dbReference type="EMBL" id="AF149416">
    <property type="protein sequence ID" value="AAF07272.2"/>
    <property type="molecule type" value="mRNA"/>
</dbReference>
<dbReference type="EMBL" id="AB032157">
    <property type="protein sequence ID" value="BAA92892.1"/>
    <property type="molecule type" value="Genomic_DNA"/>
</dbReference>
<dbReference type="EMBL" id="D17793">
    <property type="protein sequence ID" value="BAA04619.2"/>
    <property type="status" value="ALT_INIT"/>
    <property type="molecule type" value="mRNA"/>
</dbReference>
<dbReference type="EMBL" id="BT007286">
    <property type="protein sequence ID" value="AAP35950.1"/>
    <property type="molecule type" value="mRNA"/>
</dbReference>
<dbReference type="EMBL" id="AK290365">
    <property type="protein sequence ID" value="BAF83054.1"/>
    <property type="molecule type" value="mRNA"/>
</dbReference>
<dbReference type="EMBL" id="AK296829">
    <property type="protein sequence ID" value="BAG59399.1"/>
    <property type="molecule type" value="mRNA"/>
</dbReference>
<dbReference type="EMBL" id="AL391427">
    <property type="status" value="NOT_ANNOTATED_CDS"/>
    <property type="molecule type" value="Genomic_DNA"/>
</dbReference>
<dbReference type="EMBL" id="CH471072">
    <property type="protein sequence ID" value="EAW86454.1"/>
    <property type="molecule type" value="Genomic_DNA"/>
</dbReference>
<dbReference type="EMBL" id="BC001479">
    <property type="protein sequence ID" value="AAH01479.1"/>
    <property type="molecule type" value="mRNA"/>
</dbReference>
<dbReference type="EMBL" id="BC019230">
    <property type="protein sequence ID" value="AAH19230.1"/>
    <property type="molecule type" value="mRNA"/>
</dbReference>
<dbReference type="CCDS" id="CCDS7063.1">
    <molecule id="P42330-1"/>
</dbReference>
<dbReference type="PIR" id="B57407">
    <property type="entry name" value="B57407"/>
</dbReference>
<dbReference type="PIR" id="I73674">
    <property type="entry name" value="I73674"/>
</dbReference>
<dbReference type="RefSeq" id="NP_001240837.1">
    <property type="nucleotide sequence ID" value="NM_001253908.1"/>
</dbReference>
<dbReference type="RefSeq" id="NP_003730.4">
    <molecule id="P42330-1"/>
    <property type="nucleotide sequence ID" value="NM_003739.5"/>
</dbReference>
<dbReference type="PDB" id="1RY0">
    <property type="method" value="X-ray"/>
    <property type="resolution" value="1.69 A"/>
    <property type="chains" value="A/B=1-323"/>
</dbReference>
<dbReference type="PDB" id="1RY8">
    <property type="method" value="X-ray"/>
    <property type="resolution" value="1.69 A"/>
    <property type="chains" value="A/B=1-323"/>
</dbReference>
<dbReference type="PDB" id="1S1P">
    <property type="method" value="X-ray"/>
    <property type="resolution" value="1.20 A"/>
    <property type="chains" value="A=1-323"/>
</dbReference>
<dbReference type="PDB" id="1S1R">
    <property type="method" value="X-ray"/>
    <property type="resolution" value="2.00 A"/>
    <property type="chains" value="A=1-323"/>
</dbReference>
<dbReference type="PDB" id="1S2A">
    <property type="method" value="X-ray"/>
    <property type="resolution" value="1.70 A"/>
    <property type="chains" value="A=1-323"/>
</dbReference>
<dbReference type="PDB" id="1S2C">
    <property type="method" value="X-ray"/>
    <property type="resolution" value="1.80 A"/>
    <property type="chains" value="A=1-323"/>
</dbReference>
<dbReference type="PDB" id="1XF0">
    <property type="method" value="X-ray"/>
    <property type="resolution" value="2.00 A"/>
    <property type="chains" value="A=1-323"/>
</dbReference>
<dbReference type="PDB" id="1ZQ5">
    <property type="method" value="X-ray"/>
    <property type="resolution" value="1.30 A"/>
    <property type="chains" value="A=1-323"/>
</dbReference>
<dbReference type="PDB" id="2F38">
    <property type="method" value="X-ray"/>
    <property type="resolution" value="2.00 A"/>
    <property type="chains" value="A=1-323"/>
</dbReference>
<dbReference type="PDB" id="2FGB">
    <property type="method" value="X-ray"/>
    <property type="resolution" value="1.35 A"/>
    <property type="chains" value="A=1-323"/>
</dbReference>
<dbReference type="PDB" id="3R43">
    <property type="method" value="X-ray"/>
    <property type="resolution" value="2.00 A"/>
    <property type="chains" value="A=1-323"/>
</dbReference>
<dbReference type="PDB" id="3R58">
    <property type="method" value="X-ray"/>
    <property type="resolution" value="2.30 A"/>
    <property type="chains" value="A=1-323"/>
</dbReference>
<dbReference type="PDB" id="3R6I">
    <property type="method" value="X-ray"/>
    <property type="resolution" value="1.95 A"/>
    <property type="chains" value="A=1-323"/>
</dbReference>
<dbReference type="PDB" id="3R7M">
    <property type="method" value="X-ray"/>
    <property type="resolution" value="2.10 A"/>
    <property type="chains" value="A=1-323"/>
</dbReference>
<dbReference type="PDB" id="3R8G">
    <property type="method" value="X-ray"/>
    <property type="resolution" value="1.80 A"/>
    <property type="chains" value="A=1-323"/>
</dbReference>
<dbReference type="PDB" id="3R8H">
    <property type="method" value="X-ray"/>
    <property type="resolution" value="1.90 A"/>
    <property type="chains" value="A=1-323"/>
</dbReference>
<dbReference type="PDB" id="3R94">
    <property type="method" value="X-ray"/>
    <property type="resolution" value="2.01 A"/>
    <property type="chains" value="A=1-323"/>
</dbReference>
<dbReference type="PDB" id="3UFY">
    <property type="method" value="X-ray"/>
    <property type="resolution" value="1.90 A"/>
    <property type="chains" value="A=1-323"/>
</dbReference>
<dbReference type="PDB" id="3UG8">
    <property type="method" value="X-ray"/>
    <property type="resolution" value="1.73 A"/>
    <property type="chains" value="A=1-323"/>
</dbReference>
<dbReference type="PDB" id="3UGR">
    <property type="method" value="X-ray"/>
    <property type="resolution" value="1.65 A"/>
    <property type="chains" value="A=1-323"/>
</dbReference>
<dbReference type="PDB" id="3UWE">
    <property type="method" value="X-ray"/>
    <property type="resolution" value="1.68 A"/>
    <property type="chains" value="A=1-323"/>
</dbReference>
<dbReference type="PDB" id="4DBS">
    <property type="method" value="X-ray"/>
    <property type="resolution" value="1.85 A"/>
    <property type="chains" value="A/B=1-323"/>
</dbReference>
<dbReference type="PDB" id="4DBU">
    <property type="method" value="X-ray"/>
    <property type="resolution" value="2.53 A"/>
    <property type="chains" value="A/B=1-323"/>
</dbReference>
<dbReference type="PDB" id="4DBW">
    <property type="method" value="X-ray"/>
    <property type="resolution" value="1.80 A"/>
    <property type="chains" value="A/B=1-323"/>
</dbReference>
<dbReference type="PDB" id="4DZ5">
    <property type="method" value="X-ray"/>
    <property type="resolution" value="1.70 A"/>
    <property type="chains" value="A=1-323"/>
</dbReference>
<dbReference type="PDB" id="4FA3">
    <property type="method" value="X-ray"/>
    <property type="resolution" value="2.20 A"/>
    <property type="chains" value="A=1-323"/>
</dbReference>
<dbReference type="PDB" id="4FAL">
    <property type="method" value="X-ray"/>
    <property type="resolution" value="2.00 A"/>
    <property type="chains" value="A=1-323"/>
</dbReference>
<dbReference type="PDB" id="4FAM">
    <property type="method" value="X-ray"/>
    <property type="resolution" value="2.00 A"/>
    <property type="chains" value="A/B=1-323"/>
</dbReference>
<dbReference type="PDB" id="4H7C">
    <property type="method" value="X-ray"/>
    <property type="resolution" value="1.97 A"/>
    <property type="chains" value="A=1-323"/>
</dbReference>
<dbReference type="PDB" id="4HMN">
    <property type="method" value="X-ray"/>
    <property type="resolution" value="2.40 A"/>
    <property type="chains" value="A=1-323"/>
</dbReference>
<dbReference type="PDB" id="4WDT">
    <property type="method" value="X-ray"/>
    <property type="resolution" value="1.50 A"/>
    <property type="chains" value="A=1-323"/>
</dbReference>
<dbReference type="PDB" id="4WDU">
    <property type="method" value="X-ray"/>
    <property type="resolution" value="1.70 A"/>
    <property type="chains" value="A=1-323"/>
</dbReference>
<dbReference type="PDB" id="4WDW">
    <property type="method" value="X-ray"/>
    <property type="resolution" value="1.94 A"/>
    <property type="chains" value="A/B=1-323"/>
</dbReference>
<dbReference type="PDB" id="4WDX">
    <property type="method" value="X-ray"/>
    <property type="resolution" value="1.64 A"/>
    <property type="chains" value="A/B=1-323"/>
</dbReference>
<dbReference type="PDB" id="4WRH">
    <property type="method" value="X-ray"/>
    <property type="resolution" value="1.60 A"/>
    <property type="chains" value="A=1-323"/>
</dbReference>
<dbReference type="PDB" id="4XVD">
    <property type="method" value="X-ray"/>
    <property type="resolution" value="2.81 A"/>
    <property type="chains" value="A/B=1-323"/>
</dbReference>
<dbReference type="PDB" id="4XVE">
    <property type="method" value="X-ray"/>
    <property type="resolution" value="1.55 A"/>
    <property type="chains" value="A=1-323"/>
</dbReference>
<dbReference type="PDB" id="4YVV">
    <property type="method" value="X-ray"/>
    <property type="resolution" value="2.30 A"/>
    <property type="chains" value="A/B=1-323"/>
</dbReference>
<dbReference type="PDB" id="4YVX">
    <property type="method" value="X-ray"/>
    <property type="resolution" value="2.30 A"/>
    <property type="chains" value="A/B=1-323"/>
</dbReference>
<dbReference type="PDB" id="4ZFC">
    <property type="method" value="X-ray"/>
    <property type="resolution" value="2.00 A"/>
    <property type="chains" value="A/B=1-323"/>
</dbReference>
<dbReference type="PDB" id="5HNT">
    <property type="method" value="X-ray"/>
    <property type="resolution" value="2.00 A"/>
    <property type="chains" value="A/C=6-320"/>
</dbReference>
<dbReference type="PDB" id="5HNU">
    <property type="method" value="X-ray"/>
    <property type="resolution" value="2.00 A"/>
    <property type="chains" value="A/C=6-320"/>
</dbReference>
<dbReference type="PDB" id="6A7B">
    <property type="method" value="X-ray"/>
    <property type="resolution" value="2.37 A"/>
    <property type="chains" value="A/B=1-323"/>
</dbReference>
<dbReference type="PDB" id="6F2U">
    <property type="method" value="X-ray"/>
    <property type="resolution" value="1.88 A"/>
    <property type="chains" value="A/B=6-319"/>
</dbReference>
<dbReference type="PDB" id="6F78">
    <property type="method" value="X-ray"/>
    <property type="resolution" value="1.30 A"/>
    <property type="chains" value="A/B=6-323"/>
</dbReference>
<dbReference type="PDB" id="6GXK">
    <property type="method" value="X-ray"/>
    <property type="resolution" value="1.70 A"/>
    <property type="chains" value="A/B=6-323"/>
</dbReference>
<dbReference type="PDB" id="7C7F">
    <property type="method" value="X-ray"/>
    <property type="resolution" value="1.70 A"/>
    <property type="chains" value="A/B=1-323"/>
</dbReference>
<dbReference type="PDB" id="7C7G">
    <property type="method" value="X-ray"/>
    <property type="resolution" value="1.86 A"/>
    <property type="chains" value="A/B=1-323"/>
</dbReference>
<dbReference type="PDB" id="7C7H">
    <property type="method" value="X-ray"/>
    <property type="resolution" value="1.86 A"/>
    <property type="chains" value="A/B=1-323"/>
</dbReference>
<dbReference type="PDB" id="7WQM">
    <property type="method" value="X-ray"/>
    <property type="resolution" value="2.13 A"/>
    <property type="chains" value="A/B=2-323"/>
</dbReference>
<dbReference type="PDB" id="7WQR">
    <property type="method" value="X-ray"/>
    <property type="resolution" value="2.12 A"/>
    <property type="chains" value="A/B=2-323"/>
</dbReference>
<dbReference type="PDB" id="7WQS">
    <property type="method" value="X-ray"/>
    <property type="resolution" value="2.07 A"/>
    <property type="chains" value="A/B=2-323"/>
</dbReference>
<dbReference type="PDB" id="7X3L">
    <property type="method" value="X-ray"/>
    <property type="resolution" value="1.86 A"/>
    <property type="chains" value="A/B=2-323"/>
</dbReference>
<dbReference type="PDB" id="7X3M">
    <property type="method" value="X-ray"/>
    <property type="resolution" value="2.69 A"/>
    <property type="chains" value="A/B=2-323"/>
</dbReference>
<dbReference type="PDB" id="7X3O">
    <property type="method" value="X-ray"/>
    <property type="resolution" value="2.00 A"/>
    <property type="chains" value="A/B=2-323"/>
</dbReference>
<dbReference type="PDB" id="8BBS">
    <property type="method" value="X-ray"/>
    <property type="resolution" value="1.40 A"/>
    <property type="chains" value="A/B=1-323"/>
</dbReference>
<dbReference type="PDB" id="8I0C">
    <property type="method" value="X-ray"/>
    <property type="resolution" value="2.33 A"/>
    <property type="chains" value="A/B=2-323"/>
</dbReference>
<dbReference type="PDB" id="8JP1">
    <property type="method" value="X-ray"/>
    <property type="resolution" value="2.00 A"/>
    <property type="chains" value="A/B=1-323"/>
</dbReference>
<dbReference type="PDB" id="8RB6">
    <property type="method" value="X-ray"/>
    <property type="resolution" value="2.00 A"/>
    <property type="chains" value="A/B=1-323"/>
</dbReference>
<dbReference type="PDB" id="9FFD">
    <property type="method" value="X-ray"/>
    <property type="resolution" value="1.75 A"/>
    <property type="chains" value="A/B=1-323"/>
</dbReference>
<dbReference type="PDBsum" id="1RY0"/>
<dbReference type="PDBsum" id="1RY8"/>
<dbReference type="PDBsum" id="1S1P"/>
<dbReference type="PDBsum" id="1S1R"/>
<dbReference type="PDBsum" id="1S2A"/>
<dbReference type="PDBsum" id="1S2C"/>
<dbReference type="PDBsum" id="1XF0"/>
<dbReference type="PDBsum" id="1ZQ5"/>
<dbReference type="PDBsum" id="2F38"/>
<dbReference type="PDBsum" id="2FGB"/>
<dbReference type="PDBsum" id="3R43"/>
<dbReference type="PDBsum" id="3R58"/>
<dbReference type="PDBsum" id="3R6I"/>
<dbReference type="PDBsum" id="3R7M"/>
<dbReference type="PDBsum" id="3R8G"/>
<dbReference type="PDBsum" id="3R8H"/>
<dbReference type="PDBsum" id="3R94"/>
<dbReference type="PDBsum" id="3UFY"/>
<dbReference type="PDBsum" id="3UG8"/>
<dbReference type="PDBsum" id="3UGR"/>
<dbReference type="PDBsum" id="3UWE"/>
<dbReference type="PDBsum" id="4DBS"/>
<dbReference type="PDBsum" id="4DBU"/>
<dbReference type="PDBsum" id="4DBW"/>
<dbReference type="PDBsum" id="4DZ5"/>
<dbReference type="PDBsum" id="4FA3"/>
<dbReference type="PDBsum" id="4FAL"/>
<dbReference type="PDBsum" id="4FAM"/>
<dbReference type="PDBsum" id="4H7C"/>
<dbReference type="PDBsum" id="4HMN"/>
<dbReference type="PDBsum" id="4WDT"/>
<dbReference type="PDBsum" id="4WDU"/>
<dbReference type="PDBsum" id="4WDW"/>
<dbReference type="PDBsum" id="4WDX"/>
<dbReference type="PDBsum" id="4WRH"/>
<dbReference type="PDBsum" id="4XVD"/>
<dbReference type="PDBsum" id="4XVE"/>
<dbReference type="PDBsum" id="4YVV"/>
<dbReference type="PDBsum" id="4YVX"/>
<dbReference type="PDBsum" id="4ZFC"/>
<dbReference type="PDBsum" id="5HNT"/>
<dbReference type="PDBsum" id="5HNU"/>
<dbReference type="PDBsum" id="6A7B"/>
<dbReference type="PDBsum" id="6F2U"/>
<dbReference type="PDBsum" id="6F78"/>
<dbReference type="PDBsum" id="6GXK"/>
<dbReference type="PDBsum" id="7C7F"/>
<dbReference type="PDBsum" id="7C7G"/>
<dbReference type="PDBsum" id="7C7H"/>
<dbReference type="PDBsum" id="7WQM"/>
<dbReference type="PDBsum" id="7WQR"/>
<dbReference type="PDBsum" id="7WQS"/>
<dbReference type="PDBsum" id="7X3L"/>
<dbReference type="PDBsum" id="7X3M"/>
<dbReference type="PDBsum" id="7X3O"/>
<dbReference type="PDBsum" id="8BBS"/>
<dbReference type="PDBsum" id="8I0C"/>
<dbReference type="PDBsum" id="8JP1"/>
<dbReference type="PDBsum" id="8RB6"/>
<dbReference type="PDBsum" id="9FFD"/>
<dbReference type="SMR" id="P42330"/>
<dbReference type="BioGRID" id="114196">
    <property type="interactions" value="41"/>
</dbReference>
<dbReference type="FunCoup" id="P42330">
    <property type="interactions" value="818"/>
</dbReference>
<dbReference type="IntAct" id="P42330">
    <property type="interactions" value="14"/>
</dbReference>
<dbReference type="STRING" id="9606.ENSP00000369927"/>
<dbReference type="BindingDB" id="P42330"/>
<dbReference type="ChEMBL" id="CHEMBL4681"/>
<dbReference type="DrugBank" id="DB07700">
    <property type="generic name" value="3-carboxamido-1,3,5(10)-estratrien-17(R)-spiro-2'(5',5'-dimethyl-6'oxo)tetrahydropyran"/>
</dbReference>
<dbReference type="DrugBank" id="DB14511">
    <property type="generic name" value="Acetate"/>
</dbReference>
<dbReference type="DrugBank" id="DB01561">
    <property type="generic name" value="Androstanedione"/>
</dbReference>
<dbReference type="DrugBank" id="DB01536">
    <property type="generic name" value="Androstenedione"/>
</dbReference>
<dbReference type="DrugBank" id="DB00997">
    <property type="generic name" value="Doxorubicin"/>
</dbReference>
<dbReference type="DrugBank" id="DB01039">
    <property type="generic name" value="Fenofibrate"/>
</dbReference>
<dbReference type="DrugBank" id="DB02266">
    <property type="generic name" value="Flufenamic acid"/>
</dbReference>
<dbReference type="DrugBank" id="DB13751">
    <property type="generic name" value="Glycyrrhizic acid"/>
</dbReference>
<dbReference type="DrugBank" id="DB00328">
    <property type="generic name" value="Indomethacin"/>
</dbReference>
<dbReference type="DrugBank" id="DB06077">
    <property type="generic name" value="Lumateperone"/>
</dbReference>
<dbReference type="DrugBank" id="DB00959">
    <property type="generic name" value="Methylprednisolone"/>
</dbReference>
<dbReference type="DrugBank" id="DB00157">
    <property type="generic name" value="NADH"/>
</dbReference>
<dbReference type="DrugBank" id="DB03461">
    <property type="generic name" value="Nicotinamide adenine dinucleotide phosphate"/>
</dbReference>
<dbReference type="DrugBank" id="DB09074">
    <property type="generic name" value="Olaparib"/>
</dbReference>
<dbReference type="DrugBank" id="DB00776">
    <property type="generic name" value="Oxcarbazepine"/>
</dbReference>
<dbReference type="DrugBank" id="DB02056">
    <property type="generic name" value="Prostaglandin D2"/>
</dbReference>
<dbReference type="DrugBank" id="DB01698">
    <property type="generic name" value="Rutin"/>
</dbReference>
<dbReference type="DrugBank" id="DB02901">
    <property type="generic name" value="Stanolone"/>
</dbReference>
<dbReference type="DrugCentral" id="P42330"/>
<dbReference type="GuidetoPHARMACOLOGY" id="1382"/>
<dbReference type="SwissLipids" id="SLP:000000804"/>
<dbReference type="SwissLipids" id="SLP:000001647">
    <molecule id="P42330-1"/>
</dbReference>
<dbReference type="GlyGen" id="P42330">
    <property type="glycosylation" value="1 site, 1 O-linked glycan (1 site)"/>
</dbReference>
<dbReference type="iPTMnet" id="P42330"/>
<dbReference type="PhosphoSitePlus" id="P42330"/>
<dbReference type="SwissPalm" id="P42330"/>
<dbReference type="BioMuta" id="AKR1C3"/>
<dbReference type="DMDM" id="308153646"/>
<dbReference type="jPOST" id="P42330"/>
<dbReference type="MassIVE" id="P42330"/>
<dbReference type="PaxDb" id="9606-ENSP00000369927"/>
<dbReference type="PeptideAtlas" id="P42330"/>
<dbReference type="ProteomicsDB" id="4506"/>
<dbReference type="ProteomicsDB" id="55504">
    <molecule id="P42330-1"/>
</dbReference>
<dbReference type="Pumba" id="P42330"/>
<dbReference type="Antibodypedia" id="4389">
    <property type="antibodies" value="395 antibodies from 36 providers"/>
</dbReference>
<dbReference type="DNASU" id="8644"/>
<dbReference type="Ensembl" id="ENST00000380554.5">
    <molecule id="P42330-1"/>
    <property type="protein sequence ID" value="ENSP00000369927.3"/>
    <property type="gene ID" value="ENSG00000196139.14"/>
</dbReference>
<dbReference type="GeneID" id="8644"/>
<dbReference type="KEGG" id="hsa:8644"/>
<dbReference type="MANE-Select" id="ENST00000380554.5">
    <property type="protein sequence ID" value="ENSP00000369927.3"/>
    <property type="RefSeq nucleotide sequence ID" value="NM_003739.6"/>
    <property type="RefSeq protein sequence ID" value="NP_003730.4"/>
</dbReference>
<dbReference type="UCSC" id="uc001ihu.4">
    <molecule id="P42330-1"/>
    <property type="organism name" value="human"/>
</dbReference>
<dbReference type="AGR" id="HGNC:386"/>
<dbReference type="CTD" id="8644"/>
<dbReference type="DisGeNET" id="8644"/>
<dbReference type="GeneCards" id="AKR1C3"/>
<dbReference type="HGNC" id="HGNC:386">
    <property type="gene designation" value="AKR1C3"/>
</dbReference>
<dbReference type="HPA" id="ENSG00000196139">
    <property type="expression patterns" value="Tissue enhanced (intestine)"/>
</dbReference>
<dbReference type="MIM" id="603966">
    <property type="type" value="gene"/>
</dbReference>
<dbReference type="neXtProt" id="NX_P42330"/>
<dbReference type="OpenTargets" id="ENSG00000196139"/>
<dbReference type="PharmGKB" id="PA24679"/>
<dbReference type="VEuPathDB" id="HostDB:ENSG00000196139"/>
<dbReference type="eggNOG" id="KOG1577">
    <property type="taxonomic scope" value="Eukaryota"/>
</dbReference>
<dbReference type="GeneTree" id="ENSGT00940000163208"/>
<dbReference type="HOGENOM" id="CLU_023205_0_0_1"/>
<dbReference type="InParanoid" id="P42330"/>
<dbReference type="OMA" id="MHWPASL"/>
<dbReference type="OrthoDB" id="416253at2759"/>
<dbReference type="PAN-GO" id="P42330">
    <property type="GO annotations" value="9 GO annotations based on evolutionary models"/>
</dbReference>
<dbReference type="PhylomeDB" id="P42330"/>
<dbReference type="TreeFam" id="TF106492"/>
<dbReference type="BioCyc" id="MetaCyc:HS03054-MONOMER"/>
<dbReference type="BRENDA" id="1.1.1.188">
    <property type="organism ID" value="2681"/>
</dbReference>
<dbReference type="BRENDA" id="1.1.1.21">
    <property type="organism ID" value="2681"/>
</dbReference>
<dbReference type="BRENDA" id="1.1.1.213">
    <property type="organism ID" value="2681"/>
</dbReference>
<dbReference type="BRENDA" id="1.1.1.239">
    <property type="organism ID" value="2681"/>
</dbReference>
<dbReference type="BRENDA" id="1.1.1.357">
    <property type="organism ID" value="2681"/>
</dbReference>
<dbReference type="BRENDA" id="1.1.1.51">
    <property type="organism ID" value="2681"/>
</dbReference>
<dbReference type="BRENDA" id="1.1.1.62">
    <property type="organism ID" value="2681"/>
</dbReference>
<dbReference type="BRENDA" id="1.1.1.64">
    <property type="organism ID" value="2681"/>
</dbReference>
<dbReference type="BRENDA" id="1.3.1.20">
    <property type="organism ID" value="2681"/>
</dbReference>
<dbReference type="PathwayCommons" id="P42330"/>
<dbReference type="Reactome" id="R-HSA-193368">
    <property type="pathway name" value="Synthesis of bile acids and bile salts via 7alpha-hydroxycholesterol"/>
</dbReference>
<dbReference type="Reactome" id="R-HSA-193775">
    <property type="pathway name" value="Synthesis of bile acids and bile salts via 24-hydroxycholesterol"/>
</dbReference>
<dbReference type="Reactome" id="R-HSA-193807">
    <property type="pathway name" value="Synthesis of bile acids and bile salts via 27-hydroxycholesterol"/>
</dbReference>
<dbReference type="Reactome" id="R-HSA-2162123">
    <property type="pathway name" value="Synthesis of Prostaglandins (PG) and Thromboxanes (TX)"/>
</dbReference>
<dbReference type="Reactome" id="R-HSA-5365859">
    <property type="pathway name" value="RA biosynthesis pathway"/>
</dbReference>
<dbReference type="Reactome" id="R-HSA-975634">
    <property type="pathway name" value="Retinoid metabolism and transport"/>
</dbReference>
<dbReference type="SABIO-RK" id="P42330"/>
<dbReference type="SignaLink" id="P42330"/>
<dbReference type="SIGNOR" id="P42330"/>
<dbReference type="BioGRID-ORCS" id="8644">
    <property type="hits" value="9 hits in 1122 CRISPR screens"/>
</dbReference>
<dbReference type="CD-CODE" id="91857CE7">
    <property type="entry name" value="Nucleolus"/>
</dbReference>
<dbReference type="ChiTaRS" id="AKR1C3">
    <property type="organism name" value="human"/>
</dbReference>
<dbReference type="EvolutionaryTrace" id="P42330"/>
<dbReference type="GeneWiki" id="AKR1C3"/>
<dbReference type="GenomeRNAi" id="8644"/>
<dbReference type="Pharos" id="P42330">
    <property type="development level" value="Tchem"/>
</dbReference>
<dbReference type="PRO" id="PR:P42330"/>
<dbReference type="Proteomes" id="UP000005640">
    <property type="component" value="Chromosome 10"/>
</dbReference>
<dbReference type="RNAct" id="P42330">
    <property type="molecule type" value="protein"/>
</dbReference>
<dbReference type="Bgee" id="ENSG00000196139">
    <property type="expression patterns" value="Expressed in jejunal mucosa and 199 other cell types or tissues"/>
</dbReference>
<dbReference type="ExpressionAtlas" id="P42330">
    <property type="expression patterns" value="baseline and differential"/>
</dbReference>
<dbReference type="GO" id="GO:0005737">
    <property type="term" value="C:cytoplasm"/>
    <property type="evidence" value="ECO:0000314"/>
    <property type="project" value="UniProtKB"/>
</dbReference>
<dbReference type="GO" id="GO:0005829">
    <property type="term" value="C:cytosol"/>
    <property type="evidence" value="ECO:0000318"/>
    <property type="project" value="GO_Central"/>
</dbReference>
<dbReference type="GO" id="GO:0070062">
    <property type="term" value="C:extracellular exosome"/>
    <property type="evidence" value="ECO:0007005"/>
    <property type="project" value="UniProtKB"/>
</dbReference>
<dbReference type="GO" id="GO:0005634">
    <property type="term" value="C:nucleus"/>
    <property type="evidence" value="ECO:0000314"/>
    <property type="project" value="UniProtKB"/>
</dbReference>
<dbReference type="GO" id="GO:0047020">
    <property type="term" value="F:15-hydroxyprostaglandin-D dehydrogenase (NADP+) activity"/>
    <property type="evidence" value="ECO:0000314"/>
    <property type="project" value="UniProtKB"/>
</dbReference>
<dbReference type="GO" id="GO:0047024">
    <property type="term" value="F:5-alpha-androstane-3-beta,17-beta-diol dehydrogenase (NADP+) activity"/>
    <property type="evidence" value="ECO:0007669"/>
    <property type="project" value="UniProtKB-EC"/>
</dbReference>
<dbReference type="GO" id="GO:0004033">
    <property type="term" value="F:aldo-keto reductase (NADPH) activity"/>
    <property type="evidence" value="ECO:0000314"/>
    <property type="project" value="UniProtKB"/>
</dbReference>
<dbReference type="GO" id="GO:0004032">
    <property type="term" value="F:aldose reductase (NADPH) activity"/>
    <property type="evidence" value="ECO:0000314"/>
    <property type="project" value="UniProtKB"/>
</dbReference>
<dbReference type="GO" id="GO:0004745">
    <property type="term" value="F:all-trans-retinol dehydrogenase (NAD+) activity"/>
    <property type="evidence" value="ECO:0000314"/>
    <property type="project" value="UniProtKB"/>
</dbReference>
<dbReference type="GO" id="GO:0052650">
    <property type="term" value="F:all-trans-retinol dehydrogenase (NADP+) activity"/>
    <property type="evidence" value="ECO:0000304"/>
    <property type="project" value="Reactome"/>
</dbReference>
<dbReference type="GO" id="GO:0047044">
    <property type="term" value="F:androstan-3-alpha,17-beta-diol dehydrogenase (NAD+) activity"/>
    <property type="evidence" value="ECO:0007669"/>
    <property type="project" value="UniProtKB-EC"/>
</dbReference>
<dbReference type="GO" id="GO:0047023">
    <property type="term" value="F:androsterone dehydrogenase [NAD(P)+] activity"/>
    <property type="evidence" value="ECO:0000314"/>
    <property type="project" value="UniProtKB"/>
</dbReference>
<dbReference type="GO" id="GO:0032052">
    <property type="term" value="F:bile acid binding"/>
    <property type="evidence" value="ECO:0000318"/>
    <property type="project" value="GO_Central"/>
</dbReference>
<dbReference type="GO" id="GO:0047787">
    <property type="term" value="F:Delta4-3-oxosteroid 5beta-reductase activity"/>
    <property type="evidence" value="ECO:0000314"/>
    <property type="project" value="UniProtKB"/>
</dbReference>
<dbReference type="GO" id="GO:0004303">
    <property type="term" value="F:estradiol 17-beta-dehydrogenase [NAD(P)+] activity"/>
    <property type="evidence" value="ECO:0007669"/>
    <property type="project" value="UniProtKB-EC"/>
</dbReference>
<dbReference type="GO" id="GO:0045550">
    <property type="term" value="F:geranylgeranyl reductase activity"/>
    <property type="evidence" value="ECO:0000314"/>
    <property type="project" value="UniProtKB"/>
</dbReference>
<dbReference type="GO" id="GO:0045703">
    <property type="term" value="F:ketoreductase activity"/>
    <property type="evidence" value="ECO:0000314"/>
    <property type="project" value="UniProtKB"/>
</dbReference>
<dbReference type="GO" id="GO:0047086">
    <property type="term" value="F:ketosteroid monooxygenase activity"/>
    <property type="evidence" value="ECO:0000314"/>
    <property type="project" value="UniProtKB"/>
</dbReference>
<dbReference type="GO" id="GO:0016655">
    <property type="term" value="F:oxidoreductase activity, acting on NAD(P)H, quinone or similar compound as acceptor"/>
    <property type="evidence" value="ECO:0000314"/>
    <property type="project" value="UniProtKB"/>
</dbReference>
<dbReference type="GO" id="GO:0036131">
    <property type="term" value="F:prostaglandin D2 11-ketoreductase activity"/>
    <property type="evidence" value="ECO:0000269"/>
    <property type="project" value="Reactome"/>
</dbReference>
<dbReference type="GO" id="GO:0047017">
    <property type="term" value="F:prostaglandin F synthase activity"/>
    <property type="evidence" value="ECO:0007669"/>
    <property type="project" value="UniProtKB-EC"/>
</dbReference>
<dbReference type="GO" id="GO:0036130">
    <property type="term" value="F:prostaglandin H2 endoperoxidase reductase activity"/>
    <property type="evidence" value="ECO:0000269"/>
    <property type="project" value="Reactome"/>
</dbReference>
<dbReference type="GO" id="GO:0001758">
    <property type="term" value="F:retinal dehydrogenase activity"/>
    <property type="evidence" value="ECO:0000314"/>
    <property type="project" value="UniProtKB"/>
</dbReference>
<dbReference type="GO" id="GO:0047045">
    <property type="term" value="F:testosterone 17-beta-dehydrogenase (NADP+) activity"/>
    <property type="evidence" value="ECO:0007669"/>
    <property type="project" value="UniProtKB-EC"/>
</dbReference>
<dbReference type="GO" id="GO:0047035">
    <property type="term" value="F:testosterone dehydrogenase (NAD+) activity"/>
    <property type="evidence" value="ECO:0007669"/>
    <property type="project" value="UniProtKB-EC"/>
</dbReference>
<dbReference type="GO" id="GO:0030283">
    <property type="term" value="F:testosterone dehydrogenase [NAD(P)+] activity"/>
    <property type="evidence" value="ECO:0000314"/>
    <property type="project" value="UniProtKB"/>
</dbReference>
<dbReference type="GO" id="GO:0071277">
    <property type="term" value="P:cellular response to calcium ion"/>
    <property type="evidence" value="ECO:0000314"/>
    <property type="project" value="UniProtKB"/>
</dbReference>
<dbReference type="GO" id="GO:0071384">
    <property type="term" value="P:cellular response to corticosteroid stimulus"/>
    <property type="evidence" value="ECO:0000314"/>
    <property type="project" value="UniProtKB"/>
</dbReference>
<dbReference type="GO" id="GO:0071395">
    <property type="term" value="P:cellular response to jasmonic acid stimulus"/>
    <property type="evidence" value="ECO:0000314"/>
    <property type="project" value="UniProtKB"/>
</dbReference>
<dbReference type="GO" id="GO:0071799">
    <property type="term" value="P:cellular response to prostaglandin D stimulus"/>
    <property type="evidence" value="ECO:0000314"/>
    <property type="project" value="UniProtKB"/>
</dbReference>
<dbReference type="GO" id="GO:0071379">
    <property type="term" value="P:cellular response to prostaglandin stimulus"/>
    <property type="evidence" value="ECO:0000314"/>
    <property type="project" value="UniProtKB"/>
</dbReference>
<dbReference type="GO" id="GO:0009267">
    <property type="term" value="P:cellular response to starvation"/>
    <property type="evidence" value="ECO:0000270"/>
    <property type="project" value="UniProtKB"/>
</dbReference>
<dbReference type="GO" id="GO:0044597">
    <property type="term" value="P:daunorubicin metabolic process"/>
    <property type="evidence" value="ECO:0000315"/>
    <property type="project" value="UniProtKB"/>
</dbReference>
<dbReference type="GO" id="GO:0044598">
    <property type="term" value="P:doxorubicin metabolic process"/>
    <property type="evidence" value="ECO:0000315"/>
    <property type="project" value="UniProtKB"/>
</dbReference>
<dbReference type="GO" id="GO:0016488">
    <property type="term" value="P:farnesol catabolic process"/>
    <property type="evidence" value="ECO:0000314"/>
    <property type="project" value="UniProtKB"/>
</dbReference>
<dbReference type="GO" id="GO:0007186">
    <property type="term" value="P:G protein-coupled receptor signaling pathway"/>
    <property type="evidence" value="ECO:0000314"/>
    <property type="project" value="UniProtKB"/>
</dbReference>
<dbReference type="GO" id="GO:0030216">
    <property type="term" value="P:keratinocyte differentiation"/>
    <property type="evidence" value="ECO:0000270"/>
    <property type="project" value="UniProtKB"/>
</dbReference>
<dbReference type="GO" id="GO:0043170">
    <property type="term" value="P:macromolecule metabolic process"/>
    <property type="evidence" value="ECO:0000270"/>
    <property type="project" value="UniProtKB"/>
</dbReference>
<dbReference type="GO" id="GO:0008584">
    <property type="term" value="P:male gonad development"/>
    <property type="evidence" value="ECO:0000270"/>
    <property type="project" value="UniProtKB"/>
</dbReference>
<dbReference type="GO" id="GO:1900053">
    <property type="term" value="P:negative regulation of retinoic acid biosynthetic process"/>
    <property type="evidence" value="ECO:0000314"/>
    <property type="project" value="UniProtKB"/>
</dbReference>
<dbReference type="GO" id="GO:0008284">
    <property type="term" value="P:positive regulation of cell population proliferation"/>
    <property type="evidence" value="ECO:0000314"/>
    <property type="project" value="UniProtKB"/>
</dbReference>
<dbReference type="GO" id="GO:2000353">
    <property type="term" value="P:positive regulation of endothelial cell apoptotic process"/>
    <property type="evidence" value="ECO:0000314"/>
    <property type="project" value="UniProtKB"/>
</dbReference>
<dbReference type="GO" id="GO:0051897">
    <property type="term" value="P:positive regulation of phosphatidylinositol 3-kinase/protein kinase B signal transduction"/>
    <property type="evidence" value="ECO:0000314"/>
    <property type="project" value="UniProtKB"/>
</dbReference>
<dbReference type="GO" id="GO:2000379">
    <property type="term" value="P:positive regulation of reactive oxygen species metabolic process"/>
    <property type="evidence" value="ECO:0000314"/>
    <property type="project" value="UniProtKB"/>
</dbReference>
<dbReference type="GO" id="GO:0042448">
    <property type="term" value="P:progesterone metabolic process"/>
    <property type="evidence" value="ECO:0000314"/>
    <property type="project" value="UniProtKB"/>
</dbReference>
<dbReference type="GO" id="GO:0006693">
    <property type="term" value="P:prostaglandin metabolic process"/>
    <property type="evidence" value="ECO:0000314"/>
    <property type="project" value="UniProtKB"/>
</dbReference>
<dbReference type="GO" id="GO:0046457">
    <property type="term" value="P:prostanoid biosynthetic process"/>
    <property type="evidence" value="ECO:0000304"/>
    <property type="project" value="Reactome"/>
</dbReference>
<dbReference type="GO" id="GO:0048385">
    <property type="term" value="P:regulation of retinoic acid receptor signaling pathway"/>
    <property type="evidence" value="ECO:0000314"/>
    <property type="project" value="UniProtKB"/>
</dbReference>
<dbReference type="GO" id="GO:2000224">
    <property type="term" value="P:regulation of testosterone biosynthetic process"/>
    <property type="evidence" value="ECO:0000315"/>
    <property type="project" value="UniProtKB"/>
</dbReference>
<dbReference type="GO" id="GO:0070293">
    <property type="term" value="P:renal absorption"/>
    <property type="evidence" value="ECO:0000303"/>
    <property type="project" value="UniProtKB"/>
</dbReference>
<dbReference type="GO" id="GO:0007584">
    <property type="term" value="P:response to nutrient"/>
    <property type="evidence" value="ECO:0000270"/>
    <property type="project" value="UniProtKB"/>
</dbReference>
<dbReference type="GO" id="GO:0042574">
    <property type="term" value="P:retinal metabolic process"/>
    <property type="evidence" value="ECO:0000314"/>
    <property type="project" value="UniProtKB"/>
</dbReference>
<dbReference type="GO" id="GO:0001523">
    <property type="term" value="P:retinoid metabolic process"/>
    <property type="evidence" value="ECO:0000304"/>
    <property type="project" value="Reactome"/>
</dbReference>
<dbReference type="GO" id="GO:0008202">
    <property type="term" value="P:steroid metabolic process"/>
    <property type="evidence" value="ECO:0000270"/>
    <property type="project" value="UniProtKB"/>
</dbReference>
<dbReference type="GO" id="GO:0061370">
    <property type="term" value="P:testosterone biosynthetic process"/>
    <property type="evidence" value="ECO:0000315"/>
    <property type="project" value="UniProtKB"/>
</dbReference>
<dbReference type="CDD" id="cd19108">
    <property type="entry name" value="AKR_AKR1C1-35"/>
    <property type="match status" value="1"/>
</dbReference>
<dbReference type="FunFam" id="3.20.20.100:FF:000003">
    <property type="entry name" value="Aldo-keto reductase family 1 member C3"/>
    <property type="match status" value="1"/>
</dbReference>
<dbReference type="Gene3D" id="3.20.20.100">
    <property type="entry name" value="NADP-dependent oxidoreductase domain"/>
    <property type="match status" value="1"/>
</dbReference>
<dbReference type="InterPro" id="IPR020471">
    <property type="entry name" value="AKR"/>
</dbReference>
<dbReference type="InterPro" id="IPR044482">
    <property type="entry name" value="AKR1C"/>
</dbReference>
<dbReference type="InterPro" id="IPR018170">
    <property type="entry name" value="Aldo/ket_reductase_CS"/>
</dbReference>
<dbReference type="InterPro" id="IPR023210">
    <property type="entry name" value="NADP_OxRdtase_dom"/>
</dbReference>
<dbReference type="InterPro" id="IPR036812">
    <property type="entry name" value="NADP_OxRdtase_dom_sf"/>
</dbReference>
<dbReference type="PANTHER" id="PTHR11732">
    <property type="entry name" value="ALDO/KETO REDUCTASE"/>
    <property type="match status" value="1"/>
</dbReference>
<dbReference type="Pfam" id="PF00248">
    <property type="entry name" value="Aldo_ket_red"/>
    <property type="match status" value="1"/>
</dbReference>
<dbReference type="PIRSF" id="PIRSF000097">
    <property type="entry name" value="AKR"/>
    <property type="match status" value="1"/>
</dbReference>
<dbReference type="PRINTS" id="PR00069">
    <property type="entry name" value="ALDKETRDTASE"/>
</dbReference>
<dbReference type="SUPFAM" id="SSF51430">
    <property type="entry name" value="NAD(P)-linked oxidoreductase"/>
    <property type="match status" value="1"/>
</dbReference>
<dbReference type="PROSITE" id="PS00798">
    <property type="entry name" value="ALDOKETO_REDUCTASE_1"/>
    <property type="match status" value="1"/>
</dbReference>
<dbReference type="PROSITE" id="PS00062">
    <property type="entry name" value="ALDOKETO_REDUCTASE_2"/>
    <property type="match status" value="1"/>
</dbReference>
<dbReference type="PROSITE" id="PS00063">
    <property type="entry name" value="ALDOKETO_REDUCTASE_3"/>
    <property type="match status" value="1"/>
</dbReference>
<sequence length="323" mass="36853">MDSKHQCVKLNDGHFMPVLGFGTYAPPEVPRSKALEVTKLAIEAGFRHIDSAHLYNNEEQVGLAIRSKIADGSVKREDIFYTSKLWSTFHRPELVRPALENSLKKAQLDYVDLYLIHSPMSLKPGEELSPTDENGKVIFDIVDLCTTWEAMEKCKDAGLAKSIGVSNFNRRQLEMILNKPGLKYKPVCNQVECHPYFNRSKLLDFCKSKDIVLVAYSALGSQRDKRWVDPNSPVLLEDPVLCALAKKHKRTPALIALRYQLQRGVVVLAKSYNEQRIRQNVQVFEFQLTAEDMKAIDGLDRNLHYFNSDSFASHPNYPYSDEY</sequence>